<sequence length="293" mass="31544">MWICPGGGGGGGGGGGGGDREDARPAPLCCGRCWRSGCAARPPRMCRDGYEPCVNEGMCVTYHNGTGYCKCPEGFLGEYCQHRDPCEKNRCQNGGTCVAQAMLGKATCRCASGFTGEDCQYSTSHPCFVSRPCLNGGTCHMLSRDTYECTCQVGFTGKECQWTDACLSHPCANGSTCTTVANQFSCKCLTGFTGQKCETDVNECDIPGHCQHGGTCLNLPGSYQCQCLQGFTGQYCDSLYVPCAPSPCVNGGTCRQTGDFTFECNCLPETVRRGTELWERDREVWNGKEHDEN</sequence>
<comment type="function">
    <text evidence="1 4 5 6">Human-specific protein that promotes neural progenitor proliferation and evolutionary expansion of the brain neocortex by regulating the Notch signaling pathway (PubMed:29561261, PubMed:29856954, PubMed:29856955). Able to promote neural progenitor self-renewal, possibly by down-regulating neuronal differentiation genes, thereby delaying the differentiation of neuronal progenitors and leading to an overall final increase in neuronal production (PubMed:29856954). Acts by enhancing the Notch signaling pathway via two different mechanisms that probably work in parallel to reach the same effect (PubMed:29856954). Enhances Notch signaling pathway in a non-cell-autonomous manner via direct interaction with NOTCH2 (PubMed:29856954). Also promotes Notch signaling pathway in a cell-autonomous manner through inhibition of cis DLL1-NOTCH2 interactions, which promotes neuronal differentiation (By similarity).</text>
</comment>
<comment type="subunit">
    <text evidence="1 5">Interacts with NOTCH2 (PubMed:29856954). Interacts with DLL1; the interaction is direct (By similarity).</text>
</comment>
<comment type="interaction">
    <interactant intactId="EBI-22310682">
        <id>P0DPK4</id>
    </interactant>
    <interactant intactId="EBI-12006944">
        <id>O43184-4</id>
        <label>ADAM12</label>
    </interactant>
    <organismsDiffer>false</organismsDiffer>
    <experiments>3</experiments>
</comment>
<comment type="interaction">
    <interactant intactId="EBI-22310682">
        <id>P0DPK4</id>
    </interactant>
    <interactant intactId="EBI-10173507">
        <id>Q6UY14-3</id>
        <label>ADAMTSL4</label>
    </interactant>
    <organismsDiffer>false</organismsDiffer>
    <experiments>3</experiments>
</comment>
<comment type="interaction">
    <interactant intactId="EBI-22310682">
        <id>P0DPK4</id>
    </interactant>
    <interactant intactId="EBI-727098">
        <id>P21549</id>
        <label>AGXT</label>
    </interactant>
    <organismsDiffer>false</organismsDiffer>
    <experiments>3</experiments>
</comment>
<comment type="interaction">
    <interactant intactId="EBI-22310682">
        <id>P0DPK4</id>
    </interactant>
    <interactant intactId="EBI-1044483">
        <id>Q8IZ83</id>
        <label>ALDH16A1</label>
    </interactant>
    <organismsDiffer>false</organismsDiffer>
    <experiments>3</experiments>
</comment>
<comment type="interaction">
    <interactant intactId="EBI-22310682">
        <id>P0DPK4</id>
    </interactant>
    <interactant intactId="EBI-1211484">
        <id>P05187</id>
        <label>ALPP</label>
    </interactant>
    <organismsDiffer>false</organismsDiffer>
    <experiments>3</experiments>
</comment>
<comment type="interaction">
    <interactant intactId="EBI-22310682">
        <id>P0DPK4</id>
    </interactant>
    <interactant intactId="EBI-11954519">
        <id>Q49AR9</id>
        <label>ANKS1A</label>
    </interactant>
    <organismsDiffer>false</organismsDiffer>
    <experiments>3</experiments>
</comment>
<comment type="interaction">
    <interactant intactId="EBI-22310682">
        <id>P0DPK4</id>
    </interactant>
    <interactant intactId="EBI-745213">
        <id>P29972</id>
        <label>AQP1</label>
    </interactant>
    <organismsDiffer>false</organismsDiffer>
    <experiments>3</experiments>
</comment>
<comment type="interaction">
    <interactant intactId="EBI-22310682">
        <id>P0DPK4</id>
    </interactant>
    <interactant intactId="EBI-12006308">
        <id>Q7Z3C6-3</id>
        <label>ATG9A</label>
    </interactant>
    <organismsDiffer>false</organismsDiffer>
    <experiments>3</experiments>
</comment>
<comment type="interaction">
    <interactant intactId="EBI-22310682">
        <id>P0DPK4</id>
    </interactant>
    <interactant intactId="EBI-1049505">
        <id>P30049</id>
        <label>ATP5F1D</label>
    </interactant>
    <organismsDiffer>false</organismsDiffer>
    <experiments>3</experiments>
</comment>
<comment type="interaction">
    <interactant intactId="EBI-22310682">
        <id>P0DPK4</id>
    </interactant>
    <interactant intactId="EBI-10212133">
        <id>P50895</id>
        <label>BCAM</label>
    </interactant>
    <organismsDiffer>false</organismsDiffer>
    <experiments>3</experiments>
</comment>
<comment type="interaction">
    <interactant intactId="EBI-22310682">
        <id>P0DPK4</id>
    </interactant>
    <interactant intactId="EBI-1035195">
        <id>P18075</id>
        <label>BMP7</label>
    </interactant>
    <organismsDiffer>false</organismsDiffer>
    <experiments>3</experiments>
</comment>
<comment type="interaction">
    <interactant intactId="EBI-22310682">
        <id>P0DPK4</id>
    </interactant>
    <interactant intactId="EBI-12040255">
        <id>Q0VDD7-2</id>
        <label>BRME1</label>
    </interactant>
    <organismsDiffer>false</organismsDiffer>
    <experiments>3</experiments>
</comment>
<comment type="interaction">
    <interactant intactId="EBI-22310682">
        <id>P0DPK4</id>
    </interactant>
    <interactant intactId="EBI-718719">
        <id>Q9Y2V2</id>
        <label>CARHSP1</label>
    </interactant>
    <organismsDiffer>false</organismsDiffer>
    <experiments>3</experiments>
</comment>
<comment type="interaction">
    <interactant intactId="EBI-22310682">
        <id>P0DPK4</id>
    </interactant>
    <interactant intactId="EBI-744545">
        <id>Q8NEC5</id>
        <label>CATSPER1</label>
    </interactant>
    <organismsDiffer>false</organismsDiffer>
    <experiments>3</experiments>
</comment>
<comment type="interaction">
    <interactant intactId="EBI-22310682">
        <id>P0DPK4</id>
    </interactant>
    <interactant intactId="EBI-746041">
        <id>Q8TC90</id>
        <label>CCER1</label>
    </interactant>
    <organismsDiffer>false</organismsDiffer>
    <experiments>3</experiments>
</comment>
<comment type="interaction">
    <interactant intactId="EBI-22310682">
        <id>P0DPK4</id>
    </interactant>
    <interactant intactId="EBI-2115896">
        <id>Q04900</id>
        <label>CD164</label>
    </interactant>
    <organismsDiffer>false</organismsDiffer>
    <experiments>3</experiments>
</comment>
<comment type="interaction">
    <interactant intactId="EBI-22310682">
        <id>P0DPK4</id>
    </interactant>
    <interactant intactId="EBI-12139335">
        <id>Q8N6W0</id>
        <label>CELF5</label>
    </interactant>
    <organismsDiffer>false</organismsDiffer>
    <experiments>3</experiments>
</comment>
<comment type="interaction">
    <interactant intactId="EBI-22310682">
        <id>P0DPK4</id>
    </interactant>
    <interactant intactId="EBI-10274247">
        <id>Q8TCT0</id>
        <label>CERK</label>
    </interactant>
    <organismsDiffer>false</organismsDiffer>
    <experiments>3</experiments>
</comment>
<comment type="interaction">
    <interactant intactId="EBI-22310682">
        <id>P0DPK4</id>
    </interactant>
    <interactant intactId="EBI-743375">
        <id>Q9NX63</id>
        <label>CHCHD3</label>
    </interactant>
    <organismsDiffer>false</organismsDiffer>
    <experiments>3</experiments>
</comment>
<comment type="interaction">
    <interactant intactId="EBI-22310682">
        <id>P0DPK4</id>
    </interactant>
    <interactant intactId="EBI-741528">
        <id>Q9UKJ5</id>
        <label>CHIC2</label>
    </interactant>
    <organismsDiffer>false</organismsDiffer>
    <experiments>3</experiments>
</comment>
<comment type="interaction">
    <interactant intactId="EBI-22310682">
        <id>P0DPK4</id>
    </interactant>
    <interactant intactId="EBI-947551">
        <id>Q9H2X0</id>
        <label>CHRD</label>
    </interactant>
    <organismsDiffer>false</organismsDiffer>
    <experiments>3</experiments>
</comment>
<comment type="interaction">
    <interactant intactId="EBI-22310682">
        <id>P0DPK4</id>
    </interactant>
    <interactant intactId="EBI-11979451">
        <id>P07510-2</id>
        <label>CHRNG</label>
    </interactant>
    <organismsDiffer>false</organismsDiffer>
    <experiments>3</experiments>
</comment>
<comment type="interaction">
    <interactant intactId="EBI-22310682">
        <id>P0DPK4</id>
    </interactant>
    <interactant intactId="EBI-741032">
        <id>Q8NE01</id>
        <label>CNNM3</label>
    </interactant>
    <organismsDiffer>false</organismsDiffer>
    <experiments>3</experiments>
</comment>
<comment type="interaction">
    <interactant intactId="EBI-22310682">
        <id>P0DPK4</id>
    </interactant>
    <interactant intactId="EBI-747133">
        <id>P27658</id>
        <label>COL8A1</label>
    </interactant>
    <organismsDiffer>false</organismsDiffer>
    <experiments>5</experiments>
</comment>
<comment type="interaction">
    <interactant intactId="EBI-22310682">
        <id>P0DPK4</id>
    </interactant>
    <interactant intactId="EBI-10192698">
        <id>Q02930-3</id>
        <label>CREB5</label>
    </interactant>
    <organismsDiffer>false</organismsDiffer>
    <experiments>3</experiments>
</comment>
<comment type="interaction">
    <interactant intactId="EBI-22310682">
        <id>P0DPK4</id>
    </interactant>
    <interactant intactId="EBI-3870390">
        <id>P06850</id>
        <label>CRH</label>
    </interactant>
    <organismsDiffer>false</organismsDiffer>
    <experiments>3</experiments>
</comment>
<comment type="interaction">
    <interactant intactId="EBI-22310682">
        <id>P0DPK4</id>
    </interactant>
    <interactant intactId="EBI-2212355">
        <id>Q49AN0</id>
        <label>CRY2</label>
    </interactant>
    <organismsDiffer>false</organismsDiffer>
    <experiments>3</experiments>
</comment>
<comment type="interaction">
    <interactant intactId="EBI-22310682">
        <id>P0DPK4</id>
    </interactant>
    <interactant intactId="EBI-8832659">
        <id>P09228</id>
        <label>CST2</label>
    </interactant>
    <organismsDiffer>false</organismsDiffer>
    <experiments>3</experiments>
</comment>
<comment type="interaction">
    <interactant intactId="EBI-22310682">
        <id>P0DPK4</id>
    </interactant>
    <interactant intactId="EBI-3923092">
        <id>Q9H4G1</id>
        <label>CST9L</label>
    </interactant>
    <organismsDiffer>false</organismsDiffer>
    <experiments>3</experiments>
</comment>
<comment type="interaction">
    <interactant intactId="EBI-22310682">
        <id>P0DPK4</id>
    </interactant>
    <interactant intactId="EBI-747082">
        <id>Q9NSA3</id>
        <label>CTNNBIP1</label>
    </interactant>
    <organismsDiffer>false</organismsDiffer>
    <experiments>3</experiments>
</comment>
<comment type="interaction">
    <interactant intactId="EBI-22310682">
        <id>P0DPK4</id>
    </interactant>
    <interactant intactId="EBI-8636823">
        <id>Q9UBR2</id>
        <label>CTSZ</label>
    </interactant>
    <organismsDiffer>false</organismsDiffer>
    <experiments>3</experiments>
</comment>
<comment type="interaction">
    <interactant intactId="EBI-22310682">
        <id>P0DPK4</id>
    </interactant>
    <interactant intactId="EBI-14156412">
        <id>Q08AG9</id>
        <label>CYP21A2</label>
    </interactant>
    <organismsDiffer>false</organismsDiffer>
    <experiments>3</experiments>
</comment>
<comment type="interaction">
    <interactant intactId="EBI-22310682">
        <id>P0DPK4</id>
    </interactant>
    <interactant intactId="EBI-3867333">
        <id>A8MQ03</id>
        <label>CYSRT1</label>
    </interactant>
    <organismsDiffer>false</organismsDiffer>
    <experiments>3</experiments>
</comment>
<comment type="interaction">
    <interactant intactId="EBI-22310682">
        <id>P0DPK4</id>
    </interactant>
    <interactant intactId="EBI-721948">
        <id>Q8NCG7</id>
        <label>DAGLB</label>
    </interactant>
    <organismsDiffer>false</organismsDiffer>
    <experiments>3</experiments>
</comment>
<comment type="interaction">
    <interactant intactId="EBI-22310682">
        <id>P0DPK4</id>
    </interactant>
    <interactant intactId="EBI-9090939">
        <id>Q5D0E6-2</id>
        <label>DALRD3</label>
    </interactant>
    <organismsDiffer>false</organismsDiffer>
    <experiments>3</experiments>
</comment>
<comment type="interaction">
    <interactant intactId="EBI-22310682">
        <id>P0DPK4</id>
    </interactant>
    <interactant intactId="EBI-8589586">
        <id>P09172</id>
        <label>DBH</label>
    </interactant>
    <organismsDiffer>false</organismsDiffer>
    <experiments>3</experiments>
</comment>
<comment type="interaction">
    <interactant intactId="EBI-22310682">
        <id>P0DPK4</id>
    </interactant>
    <interactant intactId="EBI-4401238">
        <id>P52824</id>
        <label>DGKQ</label>
    </interactant>
    <organismsDiffer>false</organismsDiffer>
    <experiments>3</experiments>
</comment>
<comment type="interaction">
    <interactant intactId="EBI-22310682">
        <id>P0DPK4</id>
    </interactant>
    <interactant intactId="EBI-746300">
        <id>Q96LJ7</id>
        <label>DHRS1</label>
    </interactant>
    <organismsDiffer>false</organismsDiffer>
    <experiments>3</experiments>
</comment>
<comment type="interaction">
    <interactant intactId="EBI-22310682">
        <id>P0DPK4</id>
    </interactant>
    <interactant intactId="EBI-9679045">
        <id>Q9NQL9</id>
        <label>DMRT3</label>
    </interactant>
    <organismsDiffer>false</organismsDiffer>
    <experiments>3</experiments>
</comment>
<comment type="interaction">
    <interactant intactId="EBI-22310682">
        <id>P0DPK4</id>
    </interactant>
    <interactant intactId="EBI-448771">
        <id>Q92608</id>
        <label>DOCK2</label>
    </interactant>
    <organismsDiffer>false</organismsDiffer>
    <experiments>3</experiments>
</comment>
<comment type="interaction">
    <interactant intactId="EBI-22310682">
        <id>P0DPK4</id>
    </interactant>
    <interactant intactId="EBI-12139313">
        <id>P21918</id>
        <label>DRD5</label>
    </interactant>
    <organismsDiffer>false</organismsDiffer>
    <experiments>3</experiments>
</comment>
<comment type="interaction">
    <interactant intactId="EBI-22310682">
        <id>P0DPK4</id>
    </interactant>
    <interactant intactId="EBI-6309137">
        <id>Q9NPA0</id>
        <label>EMC7</label>
    </interactant>
    <organismsDiffer>false</organismsDiffer>
    <experiments>3</experiments>
</comment>
<comment type="interaction">
    <interactant intactId="EBI-22310682">
        <id>P0DPK4</id>
    </interactant>
    <interactant intactId="EBI-719750">
        <id>P00742</id>
        <label>F10</label>
    </interactant>
    <organismsDiffer>false</organismsDiffer>
    <experiments>3</experiments>
</comment>
<comment type="interaction">
    <interactant intactId="EBI-22310682">
        <id>P0DPK4</id>
    </interactant>
    <interactant intactId="EBI-12057609">
        <id>O95864-3</id>
        <label>FADS2</label>
    </interactant>
    <organismsDiffer>false</organismsDiffer>
    <experiments>3</experiments>
</comment>
<comment type="interaction">
    <interactant intactId="EBI-22310682">
        <id>P0DPK4</id>
    </interactant>
    <interactant intactId="EBI-11960181">
        <id>A4D161</id>
        <label>FAM221A</label>
    </interactant>
    <organismsDiffer>false</organismsDiffer>
    <experiments>3</experiments>
</comment>
<comment type="interaction">
    <interactant intactId="EBI-22310682">
        <id>P0DPK4</id>
    </interactant>
    <interactant intactId="EBI-6658203">
        <id>Q86YD7</id>
        <label>FAM90A1</label>
    </interactant>
    <organismsDiffer>false</organismsDiffer>
    <experiments>3</experiments>
</comment>
<comment type="interaction">
    <interactant intactId="EBI-22310682">
        <id>P0DPK4</id>
    </interactant>
    <interactant intactId="EBI-741068">
        <id>Q969U6</id>
        <label>FBXW5</label>
    </interactant>
    <organismsDiffer>false</organismsDiffer>
    <experiments>3</experiments>
</comment>
<comment type="interaction">
    <interactant intactId="EBI-22310682">
        <id>P0DPK4</id>
    </interactant>
    <interactant intactId="EBI-725515">
        <id>O43559</id>
        <label>FRS3</label>
    </interactant>
    <organismsDiffer>false</organismsDiffer>
    <experiments>3</experiments>
</comment>
<comment type="interaction">
    <interactant intactId="EBI-22310682">
        <id>P0DPK4</id>
    </interactant>
    <interactant intactId="EBI-12156897">
        <id>Q9BXU8</id>
        <label>FTHL17</label>
    </interactant>
    <organismsDiffer>false</organismsDiffer>
    <experiments>3</experiments>
</comment>
<comment type="interaction">
    <interactant intactId="EBI-22310682">
        <id>P0DPK4</id>
    </interactant>
    <interactant intactId="EBI-8803802">
        <id>Q9ULW2</id>
        <label>FZD10</label>
    </interactant>
    <organismsDiffer>false</organismsDiffer>
    <experiments>3</experiments>
</comment>
<comment type="interaction">
    <interactant intactId="EBI-22310682">
        <id>P0DPK4</id>
    </interactant>
    <interactant intactId="EBI-752049">
        <id>Q8NEG0</id>
        <label>GARIN6</label>
    </interactant>
    <organismsDiffer>false</organismsDiffer>
    <experiments>3</experiments>
</comment>
<comment type="interaction">
    <interactant intactId="EBI-22310682">
        <id>P0DPK4</id>
    </interactant>
    <interactant intactId="EBI-7466542">
        <id>P43220</id>
        <label>GLP1R</label>
    </interactant>
    <organismsDiffer>false</organismsDiffer>
    <experiments>3</experiments>
</comment>
<comment type="interaction">
    <interactant intactId="EBI-22310682">
        <id>P0DPK4</id>
    </interactant>
    <interactant intactId="EBI-12142423">
        <id>Q6IB77-2</id>
        <label>GLYAT</label>
    </interactant>
    <organismsDiffer>false</organismsDiffer>
    <experiments>3</experiments>
</comment>
<comment type="interaction">
    <interactant intactId="EBI-22310682">
        <id>P0DPK4</id>
    </interactant>
    <interactant intactId="EBI-11975289">
        <id>Q9Y223-2</id>
        <label>GNE</label>
    </interactant>
    <organismsDiffer>false</organismsDiffer>
    <experiments>3</experiments>
</comment>
<comment type="interaction">
    <interactant intactId="EBI-22310682">
        <id>P0DPK4</id>
    </interactant>
    <interactant intactId="EBI-353467">
        <id>P09211</id>
        <label>GSTP1</label>
    </interactant>
    <organismsDiffer>false</organismsDiffer>
    <experiments>3</experiments>
</comment>
<comment type="interaction">
    <interactant intactId="EBI-22310682">
        <id>P0DPK4</id>
    </interactant>
    <interactant intactId="EBI-11956675">
        <id>Q9GZV7</id>
        <label>HAPLN2</label>
    </interactant>
    <organismsDiffer>false</organismsDiffer>
    <experiments>3</experiments>
</comment>
<comment type="interaction">
    <interactant intactId="EBI-22310682">
        <id>P0DPK4</id>
    </interactant>
    <interactant intactId="EBI-714680">
        <id>P69905</id>
        <label>HBA2</label>
    </interactant>
    <organismsDiffer>false</organismsDiffer>
    <experiments>3</experiments>
</comment>
<comment type="interaction">
    <interactant intactId="EBI-22310682">
        <id>P0DPK4</id>
    </interactant>
    <interactant intactId="EBI-719843">
        <id>P02008</id>
        <label>HBZ</label>
    </interactant>
    <organismsDiffer>false</organismsDiffer>
    <experiments>3</experiments>
</comment>
<comment type="interaction">
    <interactant intactId="EBI-22310682">
        <id>P0DPK4</id>
    </interactant>
    <interactant intactId="EBI-9834454">
        <id>P08631-2</id>
        <label>HCK</label>
    </interactant>
    <organismsDiffer>false</organismsDiffer>
    <experiments>3</experiments>
</comment>
<comment type="interaction">
    <interactant intactId="EBI-22310682">
        <id>P0DPK4</id>
    </interactant>
    <interactant intactId="EBI-747421">
        <id>Q03014</id>
        <label>HHEX</label>
    </interactant>
    <organismsDiffer>false</organismsDiffer>
    <experiments>3</experiments>
</comment>
<comment type="interaction">
    <interactant intactId="EBI-22310682">
        <id>P0DPK4</id>
    </interactant>
    <interactant intactId="EBI-740785">
        <id>P49639</id>
        <label>HOXA1</label>
    </interactant>
    <organismsDiffer>false</organismsDiffer>
    <experiments>3</experiments>
</comment>
<comment type="interaction">
    <interactant intactId="EBI-22310682">
        <id>P0DPK4</id>
    </interactant>
    <interactant intactId="EBI-745290">
        <id>P17482</id>
        <label>HOXB9</label>
    </interactant>
    <organismsDiffer>false</organismsDiffer>
    <experiments>3</experiments>
</comment>
<comment type="interaction">
    <interactant intactId="EBI-22310682">
        <id>P0DPK4</id>
    </interactant>
    <interactant intactId="EBI-1752118">
        <id>P31273</id>
        <label>HOXC8</label>
    </interactant>
    <organismsDiffer>false</organismsDiffer>
    <experiments>3</experiments>
</comment>
<comment type="interaction">
    <interactant intactId="EBI-22310682">
        <id>P0DPK4</id>
    </interactant>
    <interactant intactId="EBI-749311">
        <id>P37235</id>
        <label>HPCAL1</label>
    </interactant>
    <organismsDiffer>false</organismsDiffer>
    <experiments>3</experiments>
</comment>
<comment type="interaction">
    <interactant intactId="EBI-22310682">
        <id>P0DPK4</id>
    </interactant>
    <interactant intactId="EBI-10291310">
        <id>Q96MM6</id>
        <label>HSPA12B</label>
    </interactant>
    <organismsDiffer>false</organismsDiffer>
    <experiments>3</experiments>
</comment>
<comment type="interaction">
    <interactant intactId="EBI-22310682">
        <id>P0DPK4</id>
    </interactant>
    <interactant intactId="EBI-10233928">
        <id>Q14773-3</id>
        <label>ICAM4</label>
    </interactant>
    <organismsDiffer>false</organismsDiffer>
    <experiments>3</experiments>
</comment>
<comment type="interaction">
    <interactant intactId="EBI-22310682">
        <id>P0DPK4</id>
    </interactant>
    <interactant intactId="EBI-1031632">
        <id>P22301</id>
        <label>IL10</label>
    </interactant>
    <organismsDiffer>false</organismsDiffer>
    <experiments>3</experiments>
</comment>
<comment type="interaction">
    <interactant intactId="EBI-22310682">
        <id>P0DPK4</id>
    </interactant>
    <interactant intactId="EBI-715611">
        <id>Q9C086</id>
        <label>INO80B</label>
    </interactant>
    <organismsDiffer>false</organismsDiffer>
    <experiments>3</experiments>
</comment>
<comment type="interaction">
    <interactant intactId="EBI-22310682">
        <id>P0DPK4</id>
    </interactant>
    <interactant intactId="EBI-7090529">
        <id>P01308</id>
        <label>INS</label>
    </interactant>
    <organismsDiffer>false</organismsDiffer>
    <experiments>3</experiments>
</comment>
<comment type="interaction">
    <interactant intactId="EBI-22310682">
        <id>P0DPK4</id>
    </interactant>
    <interactant intactId="EBI-300173">
        <id>P05107</id>
        <label>ITGB2</label>
    </interactant>
    <organismsDiffer>false</organismsDiffer>
    <experiments>3</experiments>
</comment>
<comment type="interaction">
    <interactant intactId="EBI-22310682">
        <id>P0DPK4</id>
    </interactant>
    <interactant intactId="EBI-11051601">
        <id>P16144-2</id>
        <label>ITGB4</label>
    </interactant>
    <organismsDiffer>false</organismsDiffer>
    <experiments>3</experiments>
</comment>
<comment type="interaction">
    <interactant intactId="EBI-22310682">
        <id>P0DPK4</id>
    </interactant>
    <interactant intactId="EBI-1223434">
        <id>P18084</id>
        <label>ITGB5</label>
    </interactant>
    <organismsDiffer>false</organismsDiffer>
    <experiments>3</experiments>
</comment>
<comment type="interaction">
    <interactant intactId="EBI-22310682">
        <id>P0DPK4</id>
    </interactant>
    <interactant intactId="EBI-2510602">
        <id>Q15040</id>
        <label>JOSD1</label>
    </interactant>
    <organismsDiffer>false</organismsDiffer>
    <experiments>3</experiments>
</comment>
<comment type="interaction">
    <interactant intactId="EBI-22310682">
        <id>P0DPK4</id>
    </interactant>
    <interactant intactId="EBI-10323864">
        <id>Q9ULS6</id>
        <label>KCNS2</label>
    </interactant>
    <organismsDiffer>false</organismsDiffer>
    <experiments>3</experiments>
</comment>
<comment type="interaction">
    <interactant intactId="EBI-22310682">
        <id>P0DPK4</id>
    </interactant>
    <interactant intactId="EBI-12382297">
        <id>Q96SI1-2</id>
        <label>KCTD15</label>
    </interactant>
    <organismsDiffer>false</organismsDiffer>
    <experiments>3</experiments>
</comment>
<comment type="interaction">
    <interactant intactId="EBI-22310682">
        <id>P0DPK4</id>
    </interactant>
    <interactant intactId="EBI-6426443">
        <id>Q2WGJ6</id>
        <label>KLHL38</label>
    </interactant>
    <organismsDiffer>false</organismsDiffer>
    <experiments>3</experiments>
</comment>
<comment type="interaction">
    <interactant intactId="EBI-22310682">
        <id>P0DPK4</id>
    </interactant>
    <interactant intactId="EBI-3915857">
        <id>O60259</id>
        <label>KLK8</label>
    </interactant>
    <organismsDiffer>false</organismsDiffer>
    <experiments>3</experiments>
</comment>
<comment type="interaction">
    <interactant intactId="EBI-22310682">
        <id>P0DPK4</id>
    </interactant>
    <interactant intactId="EBI-10981970">
        <id>Q5T749</id>
        <label>KPRP</label>
    </interactant>
    <organismsDiffer>false</organismsDiffer>
    <experiments>3</experiments>
</comment>
<comment type="interaction">
    <interactant intactId="EBI-22310682">
        <id>P0DPK4</id>
    </interactant>
    <interactant intactId="EBI-10221390">
        <id>P78385</id>
        <label>KRT83</label>
    </interactant>
    <organismsDiffer>false</organismsDiffer>
    <experiments>3</experiments>
</comment>
<comment type="interaction">
    <interactant intactId="EBI-22310682">
        <id>P0DPK4</id>
    </interactant>
    <interactant intactId="EBI-11955579">
        <id>P60014</id>
        <label>KRTAP10-10</label>
    </interactant>
    <organismsDiffer>false</organismsDiffer>
    <experiments>3</experiments>
</comment>
<comment type="interaction">
    <interactant intactId="EBI-22310682">
        <id>P0DPK4</id>
    </interactant>
    <interactant intactId="EBI-10172150">
        <id>P60370</id>
        <label>KRTAP10-5</label>
    </interactant>
    <organismsDiffer>false</organismsDiffer>
    <experiments>3</experiments>
</comment>
<comment type="interaction">
    <interactant intactId="EBI-22310682">
        <id>P0DPK4</id>
    </interactant>
    <interactant intactId="EBI-10171774">
        <id>P60410</id>
        <label>KRTAP10-8</label>
    </interactant>
    <organismsDiffer>false</organismsDiffer>
    <experiments>3</experiments>
</comment>
<comment type="interaction">
    <interactant intactId="EBI-22310682">
        <id>P0DPK4</id>
    </interactant>
    <interactant intactId="EBI-10172052">
        <id>P60411</id>
        <label>KRTAP10-9</label>
    </interactant>
    <organismsDiffer>false</organismsDiffer>
    <experiments>3</experiments>
</comment>
<comment type="interaction">
    <interactant intactId="EBI-22310682">
        <id>P0DPK4</id>
    </interactant>
    <interactant intactId="EBI-10210845">
        <id>P59990</id>
        <label>KRTAP12-1</label>
    </interactant>
    <organismsDiffer>false</organismsDiffer>
    <experiments>3</experiments>
</comment>
<comment type="interaction">
    <interactant intactId="EBI-22310682">
        <id>P0DPK4</id>
    </interactant>
    <interactant intactId="EBI-10176379">
        <id>P59991</id>
        <label>KRTAP12-2</label>
    </interactant>
    <organismsDiffer>false</organismsDiffer>
    <experiments>3</experiments>
</comment>
<comment type="interaction">
    <interactant intactId="EBI-22310682">
        <id>P0DPK4</id>
    </interactant>
    <interactant intactId="EBI-11953334">
        <id>P60328</id>
        <label>KRTAP12-3</label>
    </interactant>
    <organismsDiffer>false</organismsDiffer>
    <experiments>3</experiments>
</comment>
<comment type="interaction">
    <interactant intactId="EBI-22310682">
        <id>P0DPK4</id>
    </interactant>
    <interactant intactId="EBI-10176396">
        <id>P60329</id>
        <label>KRTAP12-4</label>
    </interactant>
    <organismsDiffer>false</organismsDiffer>
    <experiments>3</experiments>
</comment>
<comment type="interaction">
    <interactant intactId="EBI-22310682">
        <id>P0DPK4</id>
    </interactant>
    <interactant intactId="EBI-11953846">
        <id>Q52LG2</id>
        <label>KRTAP13-2</label>
    </interactant>
    <organismsDiffer>false</organismsDiffer>
    <experiments>3</experiments>
</comment>
<comment type="interaction">
    <interactant intactId="EBI-22310682">
        <id>P0DPK4</id>
    </interactant>
    <interactant intactId="EBI-10241252">
        <id>Q3SY46</id>
        <label>KRTAP13-3</label>
    </interactant>
    <organismsDiffer>false</organismsDiffer>
    <experiments>3</experiments>
</comment>
<comment type="interaction">
    <interactant intactId="EBI-22310682">
        <id>P0DPK4</id>
    </interactant>
    <interactant intactId="EBI-11953996">
        <id>Q3LI77</id>
        <label>KRTAP13-4</label>
    </interactant>
    <organismsDiffer>false</organismsDiffer>
    <experiments>3</experiments>
</comment>
<comment type="interaction">
    <interactant intactId="EBI-22310682">
        <id>P0DPK4</id>
    </interactant>
    <interactant intactId="EBI-14065470">
        <id>Q9BYR9</id>
        <label>KRTAP2-4</label>
    </interactant>
    <organismsDiffer>false</organismsDiffer>
    <experiments>3</experiments>
</comment>
<comment type="interaction">
    <interactant intactId="EBI-22310682">
        <id>P0DPK4</id>
    </interactant>
    <interactant intactId="EBI-3957672">
        <id>Q6PEX3</id>
        <label>KRTAP26-1</label>
    </interactant>
    <organismsDiffer>false</organismsDiffer>
    <experiments>3</experiments>
</comment>
<comment type="interaction">
    <interactant intactId="EBI-22310682">
        <id>P0DPK4</id>
    </interactant>
    <interactant intactId="EBI-10302392">
        <id>Q9BYQ6</id>
        <label>KRTAP4-11</label>
    </interactant>
    <organismsDiffer>false</organismsDiffer>
    <experiments>3</experiments>
</comment>
<comment type="interaction">
    <interactant intactId="EBI-22310682">
        <id>P0DPK4</id>
    </interactant>
    <interactant intactId="EBI-10172511">
        <id>Q9BYR5</id>
        <label>KRTAP4-2</label>
    </interactant>
    <organismsDiffer>false</organismsDiffer>
    <experiments>3</experiments>
</comment>
<comment type="interaction">
    <interactant intactId="EBI-22310682">
        <id>P0DPK4</id>
    </interactant>
    <interactant intactId="EBI-11958132">
        <id>Q9BYR3</id>
        <label>KRTAP4-4</label>
    </interactant>
    <organismsDiffer>false</organismsDiffer>
    <experiments>4</experiments>
</comment>
<comment type="interaction">
    <interactant intactId="EBI-22310682">
        <id>P0DPK4</id>
    </interactant>
    <interactant intactId="EBI-11993254">
        <id>Q9BYR2</id>
        <label>KRTAP4-5</label>
    </interactant>
    <organismsDiffer>false</organismsDiffer>
    <experiments>3</experiments>
</comment>
<comment type="interaction">
    <interactant intactId="EBI-22310682">
        <id>P0DPK4</id>
    </interactant>
    <interactant intactId="EBI-11993296">
        <id>Q6L8G4</id>
        <label>KRTAP5-11</label>
    </interactant>
    <organismsDiffer>false</organismsDiffer>
    <experiments>3</experiments>
</comment>
<comment type="interaction">
    <interactant intactId="EBI-22310682">
        <id>P0DPK4</id>
    </interactant>
    <interactant intactId="EBI-11974251">
        <id>Q6L8H2</id>
        <label>KRTAP5-3</label>
    </interactant>
    <organismsDiffer>false</organismsDiffer>
    <experiments>3</experiments>
</comment>
<comment type="interaction">
    <interactant intactId="EBI-22310682">
        <id>P0DPK4</id>
    </interactant>
    <interactant intactId="EBI-11963072">
        <id>Q6L8H1</id>
        <label>KRTAP5-4</label>
    </interactant>
    <organismsDiffer>false</organismsDiffer>
    <experiments>3</experiments>
</comment>
<comment type="interaction">
    <interactant intactId="EBI-22310682">
        <id>P0DPK4</id>
    </interactant>
    <interactant intactId="EBI-10250562">
        <id>Q6L8G9</id>
        <label>KRTAP5-6</label>
    </interactant>
    <organismsDiffer>false</organismsDiffer>
    <experiments>3</experiments>
</comment>
<comment type="interaction">
    <interactant intactId="EBI-22310682">
        <id>P0DPK4</id>
    </interactant>
    <interactant intactId="EBI-3958099">
        <id>P26371</id>
        <label>KRTAP5-9</label>
    </interactant>
    <organismsDiffer>false</organismsDiffer>
    <experiments>3</experiments>
</comment>
<comment type="interaction">
    <interactant intactId="EBI-22310682">
        <id>P0DPK4</id>
    </interactant>
    <interactant intactId="EBI-1044640">
        <id>Q9BYQ4</id>
        <label>KRTAP9-2</label>
    </interactant>
    <organismsDiffer>false</organismsDiffer>
    <experiments>3</experiments>
</comment>
<comment type="interaction">
    <interactant intactId="EBI-22310682">
        <id>P0DPK4</id>
    </interactant>
    <interactant intactId="EBI-1043191">
        <id>Q9BYQ3</id>
        <label>KRTAP9-3</label>
    </interactant>
    <organismsDiffer>false</organismsDiffer>
    <experiments>3</experiments>
</comment>
<comment type="interaction">
    <interactant intactId="EBI-22310682">
        <id>P0DPK4</id>
    </interactant>
    <interactant intactId="EBI-11958364">
        <id>Q9BYQ0</id>
        <label>KRTAP9-8</label>
    </interactant>
    <organismsDiffer>false</organismsDiffer>
    <experiments>3</experiments>
</comment>
<comment type="interaction">
    <interactant intactId="EBI-22310682">
        <id>P0DPK4</id>
    </interactant>
    <interactant intactId="EBI-11962058">
        <id>Q5T7P2</id>
        <label>LCE1A</label>
    </interactant>
    <organismsDiffer>false</organismsDiffer>
    <experiments>3</experiments>
</comment>
<comment type="interaction">
    <interactant intactId="EBI-22310682">
        <id>P0DPK4</id>
    </interactant>
    <interactant intactId="EBI-10245913">
        <id>Q5T7P3</id>
        <label>LCE1B</label>
    </interactant>
    <organismsDiffer>false</organismsDiffer>
    <experiments>3</experiments>
</comment>
<comment type="interaction">
    <interactant intactId="EBI-22310682">
        <id>P0DPK4</id>
    </interactant>
    <interactant intactId="EBI-11741311">
        <id>Q5T752</id>
        <label>LCE1D</label>
    </interactant>
    <organismsDiffer>false</organismsDiffer>
    <experiments>3</experiments>
</comment>
<comment type="interaction">
    <interactant intactId="EBI-22310682">
        <id>P0DPK4</id>
    </interactant>
    <interactant intactId="EBI-11955335">
        <id>Q5T753</id>
        <label>LCE1E</label>
    </interactant>
    <organismsDiffer>false</organismsDiffer>
    <experiments>3</experiments>
</comment>
<comment type="interaction">
    <interactant intactId="EBI-22310682">
        <id>P0DPK4</id>
    </interactant>
    <interactant intactId="EBI-11958008">
        <id>Q5T754</id>
        <label>LCE1F</label>
    </interactant>
    <organismsDiffer>false</organismsDiffer>
    <experiments>3</experiments>
</comment>
<comment type="interaction">
    <interactant intactId="EBI-22310682">
        <id>P0DPK4</id>
    </interactant>
    <interactant intactId="EBI-11478468">
        <id>O14633</id>
        <label>LCE2B</label>
    </interactant>
    <organismsDiffer>false</organismsDiffer>
    <experiments>4</experiments>
</comment>
<comment type="interaction">
    <interactant intactId="EBI-22310682">
        <id>P0DPK4</id>
    </interactant>
    <interactant intactId="EBI-11973993">
        <id>Q5TA81</id>
        <label>LCE2C</label>
    </interactant>
    <organismsDiffer>false</organismsDiffer>
    <experiments>3</experiments>
</comment>
<comment type="interaction">
    <interactant intactId="EBI-22310682">
        <id>P0DPK4</id>
    </interactant>
    <interactant intactId="EBI-10246750">
        <id>Q5TA82</id>
        <label>LCE2D</label>
    </interactant>
    <organismsDiffer>false</organismsDiffer>
    <experiments>3</experiments>
</comment>
<comment type="interaction">
    <interactant intactId="EBI-22310682">
        <id>P0DPK4</id>
    </interactant>
    <interactant intactId="EBI-9394625">
        <id>Q5TA76</id>
        <label>LCE3A</label>
    </interactant>
    <organismsDiffer>false</organismsDiffer>
    <experiments>3</experiments>
</comment>
<comment type="interaction">
    <interactant intactId="EBI-22310682">
        <id>P0DPK4</id>
    </interactant>
    <interactant intactId="EBI-10245291">
        <id>Q5T5A8</id>
        <label>LCE3C</label>
    </interactant>
    <organismsDiffer>false</organismsDiffer>
    <experiments>3</experiments>
</comment>
<comment type="interaction">
    <interactant intactId="EBI-22310682">
        <id>P0DPK4</id>
    </interactant>
    <interactant intactId="EBI-6658837">
        <id>Q9BYE3</id>
        <label>LCE3D</label>
    </interactant>
    <organismsDiffer>false</organismsDiffer>
    <experiments>3</experiments>
</comment>
<comment type="interaction">
    <interactant intactId="EBI-22310682">
        <id>P0DPK4</id>
    </interactant>
    <interactant intactId="EBI-10245456">
        <id>Q5T5B0</id>
        <label>LCE3E</label>
    </interactant>
    <organismsDiffer>false</organismsDiffer>
    <experiments>3</experiments>
</comment>
<comment type="interaction">
    <interactant intactId="EBI-22310682">
        <id>P0DPK4</id>
    </interactant>
    <interactant intactId="EBI-10246358">
        <id>Q5TA78</id>
        <label>LCE4A</label>
    </interactant>
    <organismsDiffer>false</organismsDiffer>
    <experiments>3</experiments>
</comment>
<comment type="interaction">
    <interactant intactId="EBI-22310682">
        <id>P0DPK4</id>
    </interactant>
    <interactant intactId="EBI-11955689">
        <id>Q5TCM9</id>
        <label>LCE5A</label>
    </interactant>
    <organismsDiffer>false</organismsDiffer>
    <experiments>3</experiments>
</comment>
<comment type="interaction">
    <interactant intactId="EBI-22310682">
        <id>P0DPK4</id>
    </interactant>
    <interactant intactId="EBI-12028858">
        <id>Q8IXW0</id>
        <label>LMNTD2</label>
    </interactant>
    <organismsDiffer>false</organismsDiffer>
    <experiments>3</experiments>
</comment>
<comment type="interaction">
    <interactant intactId="EBI-22310682">
        <id>P0DPK4</id>
    </interactant>
    <interactant intactId="EBI-739832">
        <id>Q8TBB1</id>
        <label>LNX1</label>
    </interactant>
    <organismsDiffer>false</organismsDiffer>
    <experiments>3</experiments>
</comment>
<comment type="interaction">
    <interactant intactId="EBI-22310682">
        <id>P0DPK4</id>
    </interactant>
    <interactant intactId="EBI-7910762">
        <id>Q6PJG9</id>
        <label>LRFN4</label>
    </interactant>
    <organismsDiffer>false</organismsDiffer>
    <experiments>3</experiments>
</comment>
<comment type="interaction">
    <interactant intactId="EBI-22310682">
        <id>P0DPK4</id>
    </interactant>
    <interactant intactId="EBI-10329546">
        <id>Q9Y5Y7</id>
        <label>LYVE1</label>
    </interactant>
    <organismsDiffer>false</organismsDiffer>
    <experiments>3</experiments>
</comment>
<comment type="interaction">
    <interactant intactId="EBI-22310682">
        <id>P0DPK4</id>
    </interactant>
    <interactant intactId="EBI-2683507">
        <id>Q8N5G2</id>
        <label>MACO1</label>
    </interactant>
    <organismsDiffer>false</organismsDiffer>
    <experiments>3</experiments>
</comment>
<comment type="interaction">
    <interactant intactId="EBI-22310682">
        <id>P0DPK4</id>
    </interactant>
    <interactant intactId="EBI-947402">
        <id>O60336</id>
        <label>MAPKBP1</label>
    </interactant>
    <organismsDiffer>false</organismsDiffer>
    <experiments>3</experiments>
</comment>
<comment type="interaction">
    <interactant intactId="EBI-22310682">
        <id>P0DPK4</id>
    </interactant>
    <interactant intactId="EBI-10195914">
        <id>P08582-2</id>
        <label>MELTF</label>
    </interactant>
    <organismsDiffer>false</organismsDiffer>
    <experiments>3</experiments>
</comment>
<comment type="interaction">
    <interactant intactId="EBI-22310682">
        <id>P0DPK4</id>
    </interactant>
    <interactant intactId="EBI-12120958">
        <id>Q14CX5</id>
        <label>MFSD13A</label>
    </interactant>
    <organismsDiffer>false</organismsDiffer>
    <experiments>3</experiments>
</comment>
<comment type="interaction">
    <interactant intactId="EBI-22310682">
        <id>P0DPK4</id>
    </interactant>
    <interactant intactId="EBI-1757866">
        <id>P00540</id>
        <label>MOS</label>
    </interactant>
    <organismsDiffer>false</organismsDiffer>
    <experiments>3</experiments>
</comment>
<comment type="interaction">
    <interactant intactId="EBI-22310682">
        <id>P0DPK4</id>
    </interactant>
    <interactant intactId="EBI-399076">
        <id>Q9NV56</id>
        <label>MRGBP</label>
    </interactant>
    <organismsDiffer>false</organismsDiffer>
    <experiments>3</experiments>
</comment>
<comment type="interaction">
    <interactant intactId="EBI-22310682">
        <id>P0DPK4</id>
    </interactant>
    <interactant intactId="EBI-1053902">
        <id>Q9NQ50</id>
        <label>MRPL40</label>
    </interactant>
    <organismsDiffer>false</organismsDiffer>
    <experiments>3</experiments>
</comment>
<comment type="interaction">
    <interactant intactId="EBI-22310682">
        <id>P0DPK4</id>
    </interactant>
    <interactant intactId="EBI-714236">
        <id>Q13330</id>
        <label>MTA1</label>
    </interactant>
    <organismsDiffer>false</organismsDiffer>
    <experiments>3</experiments>
</comment>
<comment type="interaction">
    <interactant intactId="EBI-22310682">
        <id>P0DPK4</id>
    </interactant>
    <interactant intactId="EBI-741574">
        <id>Q9BW11</id>
        <label>MXD3</label>
    </interactant>
    <organismsDiffer>false</organismsDiffer>
    <experiments>3</experiments>
</comment>
<comment type="interaction">
    <interactant intactId="EBI-22310682">
        <id>P0DPK4</id>
    </interactant>
    <interactant intactId="EBI-10211940">
        <id>P50539-3</id>
        <label>MXI1</label>
    </interactant>
    <organismsDiffer>false</organismsDiffer>
    <experiments>3</experiments>
</comment>
<comment type="interaction">
    <interactant intactId="EBI-22310682">
        <id>P0DPK4</id>
    </interactant>
    <interactant intactId="EBI-7950783">
        <id>Q96JP2</id>
        <label>MYO15B</label>
    </interactant>
    <organismsDiffer>false</organismsDiffer>
    <experiments>3</experiments>
</comment>
<comment type="interaction">
    <interactant intactId="EBI-22310682">
        <id>P0DPK4</id>
    </interactant>
    <interactant intactId="EBI-2858213">
        <id>Q86VE0</id>
        <label>MYPOP</label>
    </interactant>
    <organismsDiffer>false</organismsDiffer>
    <experiments>3</experiments>
</comment>
<comment type="interaction">
    <interactant intactId="EBI-22310682">
        <id>P0DPK4</id>
    </interactant>
    <interactant intactId="EBI-6979889">
        <id>Q92692-2</id>
        <label>NECTIN2</label>
    </interactant>
    <organismsDiffer>false</organismsDiffer>
    <experiments>3</experiments>
</comment>
<comment type="interaction">
    <interactant intactId="EBI-22310682">
        <id>P0DPK4</id>
    </interactant>
    <interactant intactId="EBI-12106440">
        <id>Q9NQS3-2</id>
        <label>NECTIN3</label>
    </interactant>
    <organismsDiffer>false</organismsDiffer>
    <experiments>3</experiments>
</comment>
<comment type="interaction">
    <interactant intactId="EBI-22310682">
        <id>P0DPK4</id>
    </interactant>
    <interactant intactId="EBI-11746523">
        <id>Q14511-2</id>
        <label>NEDD9</label>
    </interactant>
    <organismsDiffer>false</organismsDiffer>
    <experiments>3</experiments>
</comment>
<comment type="interaction">
    <interactant intactId="EBI-22310682">
        <id>P0DPK4</id>
    </interactant>
    <interactant intactId="EBI-10210351">
        <id>P48645</id>
        <label>NMU</label>
    </interactant>
    <organismsDiffer>false</organismsDiffer>
    <experiments>3</experiments>
</comment>
<comment type="interaction">
    <interactant intactId="EBI-22310682">
        <id>P0DPK4</id>
    </interactant>
    <interactant intactId="EBI-748927">
        <id>Q9NQX5</id>
        <label>NPDC1</label>
    </interactant>
    <organismsDiffer>false</organismsDiffer>
    <experiments>3</experiments>
</comment>
<comment type="interaction">
    <interactant intactId="EBI-22310682">
        <id>P0DPK4</id>
    </interactant>
    <interactant intactId="EBI-10250949">
        <id>Q6NSM0</id>
        <label>NR1D2</label>
    </interactant>
    <organismsDiffer>false</organismsDiffer>
    <experiments>3</experiments>
</comment>
<comment type="interaction">
    <interactant intactId="EBI-22310682">
        <id>P0DPK4</id>
    </interactant>
    <interactant intactId="EBI-12027160">
        <id>Q9P121-3</id>
        <label>NTM</label>
    </interactant>
    <organismsDiffer>false</organismsDiffer>
    <experiments>3</experiments>
</comment>
<comment type="interaction">
    <interactant intactId="EBI-22310682">
        <id>P0DPK4</id>
    </interactant>
    <interactant intactId="EBI-743459">
        <id>Q9HB63</id>
        <label>NTN4</label>
    </interactant>
    <organismsDiffer>false</organismsDiffer>
    <experiments>3</experiments>
</comment>
<comment type="interaction">
    <interactant intactId="EBI-22310682">
        <id>P0DPK4</id>
    </interactant>
    <interactant intactId="EBI-721741">
        <id>O95897</id>
        <label>OLFM2</label>
    </interactant>
    <organismsDiffer>false</organismsDiffer>
    <experiments>3</experiments>
</comment>
<comment type="interaction">
    <interactant intactId="EBI-22310682">
        <id>P0DPK4</id>
    </interactant>
    <interactant intactId="EBI-740446">
        <id>P32242</id>
        <label>OTX1</label>
    </interactant>
    <organismsDiffer>false</organismsDiffer>
    <experiments>3</experiments>
</comment>
<comment type="interaction">
    <interactant intactId="EBI-22310682">
        <id>P0DPK4</id>
    </interactant>
    <interactant intactId="EBI-2828248">
        <id>Q99571</id>
        <label>P2RX4</label>
    </interactant>
    <organismsDiffer>false</organismsDiffer>
    <experiments>3</experiments>
</comment>
<comment type="interaction">
    <interactant intactId="EBI-22310682">
        <id>P0DPK4</id>
    </interactant>
    <interactant intactId="EBI-1753251">
        <id>Q99572</id>
        <label>P2RX7</label>
    </interactant>
    <organismsDiffer>false</organismsDiffer>
    <experiments>3</experiments>
</comment>
<comment type="interaction">
    <interactant intactId="EBI-22310682">
        <id>P0DPK4</id>
    </interactant>
    <interactant intactId="EBI-10235794">
        <id>Q15077</id>
        <label>P2RY6</label>
    </interactant>
    <organismsDiffer>false</organismsDiffer>
    <experiments>3</experiments>
</comment>
<comment type="interaction">
    <interactant intactId="EBI-22310682">
        <id>P0DPK4</id>
    </interactant>
    <interactant intactId="EBI-11956269">
        <id>Q92824-2</id>
        <label>PCSK5</label>
    </interactant>
    <organismsDiffer>false</organismsDiffer>
    <experiments>3</experiments>
</comment>
<comment type="interaction">
    <interactant intactId="EBI-22310682">
        <id>P0DPK4</id>
    </interactant>
    <interactant intactId="EBI-10310808">
        <id>Q9HCN3</id>
        <label>PGAP6</label>
    </interactant>
    <organismsDiffer>false</organismsDiffer>
    <experiments>3</experiments>
</comment>
<comment type="interaction">
    <interactant intactId="EBI-22310682">
        <id>P0DPK4</id>
    </interactant>
    <interactant intactId="EBI-14084211">
        <id>A2BDE7</id>
        <label>PHLDA1</label>
    </interactant>
    <organismsDiffer>false</organismsDiffer>
    <experiments>3</experiments>
</comment>
<comment type="interaction">
    <interactant intactId="EBI-22310682">
        <id>P0DPK4</id>
    </interactant>
    <interactant intactId="EBI-2908273">
        <id>Q96S52</id>
        <label>PIGS</label>
    </interactant>
    <organismsDiffer>false</organismsDiffer>
    <experiments>3</experiments>
</comment>
<comment type="interaction">
    <interactant intactId="EBI-22310682">
        <id>P0DPK4</id>
    </interactant>
    <interactant intactId="EBI-12014286">
        <id>Q494U1-3</id>
        <label>PLEKHN1</label>
    </interactant>
    <organismsDiffer>false</organismsDiffer>
    <experiments>3</experiments>
</comment>
<comment type="interaction">
    <interactant intactId="EBI-22310682">
        <id>P0DPK4</id>
    </interactant>
    <interactant intactId="EBI-724466">
        <id>P14222</id>
        <label>PRF1</label>
    </interactant>
    <organismsDiffer>false</organismsDiffer>
    <experiments>3</experiments>
</comment>
<comment type="interaction">
    <interactant intactId="EBI-22310682">
        <id>P0DPK4</id>
    </interactant>
    <interactant intactId="EBI-11986293">
        <id>P0CG20</id>
        <label>PRR35</label>
    </interactant>
    <organismsDiffer>false</organismsDiffer>
    <experiments>3</experiments>
</comment>
<comment type="interaction">
    <interactant intactId="EBI-22310682">
        <id>P0DPK4</id>
    </interactant>
    <interactant intactId="EBI-359352">
        <id>P25786</id>
        <label>PSMA1</label>
    </interactant>
    <organismsDiffer>false</organismsDiffer>
    <experiments>3</experiments>
</comment>
<comment type="interaction">
    <interactant intactId="EBI-22310682">
        <id>P0DPK4</id>
    </interactant>
    <interactant intactId="EBI-2803245">
        <id>Q13308</id>
        <label>PTK7</label>
    </interactant>
    <organismsDiffer>false</organismsDiffer>
    <experiments>3</experiments>
</comment>
<comment type="interaction">
    <interactant intactId="EBI-22310682">
        <id>P0DPK4</id>
    </interactant>
    <interactant intactId="EBI-7199479">
        <id>Q8WUK0</id>
        <label>PTPMT1</label>
    </interactant>
    <organismsDiffer>false</organismsDiffer>
    <experiments>3</experiments>
</comment>
<comment type="interaction">
    <interactant intactId="EBI-22310682">
        <id>P0DPK4</id>
    </interactant>
    <interactant intactId="EBI-3919694">
        <id>P15151</id>
        <label>PVR</label>
    </interactant>
    <organismsDiffer>false</organismsDiffer>
    <experiments>3</experiments>
</comment>
<comment type="interaction">
    <interactant intactId="EBI-22310682">
        <id>P0DPK4</id>
    </interactant>
    <interactant intactId="EBI-948428">
        <id>Q9Y2K5</id>
        <label>R3HDM2</label>
    </interactant>
    <organismsDiffer>false</organismsDiffer>
    <experiments>3</experiments>
</comment>
<comment type="interaction">
    <interactant intactId="EBI-22310682">
        <id>P0DPK4</id>
    </interactant>
    <interactant intactId="EBI-743796">
        <id>Q8TBN0</id>
        <label>RAB3IL1</label>
    </interactant>
    <organismsDiffer>false</organismsDiffer>
    <experiments>3</experiments>
</comment>
<comment type="interaction">
    <interactant intactId="EBI-22310682">
        <id>P0DPK4</id>
    </interactant>
    <interactant intactId="EBI-720447">
        <id>O60896</id>
        <label>RAMP3</label>
    </interactant>
    <organismsDiffer>false</organismsDiffer>
    <experiments>3</experiments>
</comment>
<comment type="interaction">
    <interactant intactId="EBI-22310682">
        <id>P0DPK4</id>
    </interactant>
    <interactant intactId="EBI-740818">
        <id>Q9Y272</id>
        <label>RASD1</label>
    </interactant>
    <organismsDiffer>false</organismsDiffer>
    <experiments>3</experiments>
</comment>
<comment type="interaction">
    <interactant intactId="EBI-22310682">
        <id>P0DPK4</id>
    </interactant>
    <interactant intactId="EBI-10253121">
        <id>Q6P9E2</id>
        <label>RECK</label>
    </interactant>
    <organismsDiffer>false</organismsDiffer>
    <experiments>3</experiments>
</comment>
<comment type="interaction">
    <interactant intactId="EBI-22310682">
        <id>P0DPK4</id>
    </interactant>
    <interactant intactId="EBI-4479407">
        <id>Q86WX3</id>
        <label>RPS19BP1</label>
    </interactant>
    <organismsDiffer>false</organismsDiffer>
    <experiments>3</experiments>
</comment>
<comment type="interaction">
    <interactant intactId="EBI-22310682">
        <id>P0DPK4</id>
    </interactant>
    <interactant intactId="EBI-10258951">
        <id>Q86UN2</id>
        <label>RTN4RL1</label>
    </interactant>
    <organismsDiffer>false</organismsDiffer>
    <experiments>3</experiments>
</comment>
<comment type="interaction">
    <interactant intactId="EBI-22310682">
        <id>P0DPK4</id>
    </interactant>
    <interactant intactId="EBI-748391">
        <id>Q9BWG6</id>
        <label>SCNM1</label>
    </interactant>
    <organismsDiffer>false</organismsDiffer>
    <experiments>3</experiments>
</comment>
<comment type="interaction">
    <interactant intactId="EBI-22310682">
        <id>P0DPK4</id>
    </interactant>
    <interactant intactId="EBI-11017428">
        <id>Q13214-2</id>
        <label>SEMA3B</label>
    </interactant>
    <organismsDiffer>false</organismsDiffer>
    <experiments>3</experiments>
</comment>
<comment type="interaction">
    <interactant intactId="EBI-22310682">
        <id>P0DPK4</id>
    </interactant>
    <interactant intactId="EBI-10303490">
        <id>Q9C0C4</id>
        <label>SEMA4C</label>
    </interactant>
    <organismsDiffer>false</organismsDiffer>
    <experiments>3</experiments>
</comment>
<comment type="interaction">
    <interactant intactId="EBI-22310682">
        <id>P0DPK4</id>
    </interactant>
    <interactant intactId="EBI-11955083">
        <id>Q9NUL5-4</id>
        <label>SHFL</label>
    </interactant>
    <organismsDiffer>false</organismsDiffer>
    <experiments>3</experiments>
</comment>
<comment type="interaction">
    <interactant intactId="EBI-22310682">
        <id>P0DPK4</id>
    </interactant>
    <interactant intactId="EBI-9846338">
        <id>O76082</id>
        <label>SLC22A5</label>
    </interactant>
    <organismsDiffer>false</organismsDiffer>
    <experiments>3</experiments>
</comment>
<comment type="interaction">
    <interactant intactId="EBI-22310682">
        <id>P0DPK4</id>
    </interactant>
    <interactant intactId="EBI-11998660">
        <id>Q9UHI7-3</id>
        <label>SLC23A1</label>
    </interactant>
    <organismsDiffer>false</organismsDiffer>
    <experiments>3</experiments>
</comment>
<comment type="interaction">
    <interactant intactId="EBI-22310682">
        <id>P0DPK4</id>
    </interactant>
    <interactant intactId="EBI-10265149">
        <id>Q8N370</id>
        <label>SLC43A2</label>
    </interactant>
    <organismsDiffer>false</organismsDiffer>
    <experiments>3</experiments>
</comment>
<comment type="interaction">
    <interactant intactId="EBI-22310682">
        <id>P0DPK4</id>
    </interactant>
    <interactant intactId="EBI-12313867">
        <id>Q92911</id>
        <label>SLC5A5</label>
    </interactant>
    <organismsDiffer>false</organismsDiffer>
    <experiments>3</experiments>
</comment>
<comment type="interaction">
    <interactant intactId="EBI-22310682">
        <id>P0DPK4</id>
    </interactant>
    <interactant intactId="EBI-10311198">
        <id>Q9NP91</id>
        <label>SLC6A20</label>
    </interactant>
    <organismsDiffer>false</organismsDiffer>
    <experiments>3</experiments>
</comment>
<comment type="interaction">
    <interactant intactId="EBI-22310682">
        <id>P0DPK4</id>
    </interactant>
    <interactant intactId="EBI-750494">
        <id>P49901</id>
        <label>SMCP</label>
    </interactant>
    <organismsDiffer>false</organismsDiffer>
    <experiments>3</experiments>
</comment>
<comment type="interaction">
    <interactant intactId="EBI-22310682">
        <id>P0DPK4</id>
    </interactant>
    <interactant intactId="EBI-12041693">
        <id>Q86W54-2</id>
        <label>SPATA24</label>
    </interactant>
    <organismsDiffer>false</organismsDiffer>
    <experiments>3</experiments>
</comment>
<comment type="interaction">
    <interactant intactId="EBI-22310682">
        <id>P0DPK4</id>
    </interactant>
    <interactant intactId="EBI-8635958">
        <id>Q6RVD6</id>
        <label>SPATA8</label>
    </interactant>
    <organismsDiffer>false</organismsDiffer>
    <experiments>3</experiments>
</comment>
<comment type="interaction">
    <interactant intactId="EBI-22310682">
        <id>P0DPK4</id>
    </interactant>
    <interactant intactId="EBI-717201">
        <id>Q9UQ90</id>
        <label>SPG7</label>
    </interactant>
    <organismsDiffer>false</organismsDiffer>
    <experiments>3</experiments>
</comment>
<comment type="interaction">
    <interactant intactId="EBI-22310682">
        <id>P0DPK4</id>
    </interactant>
    <interactant intactId="EBI-14064968">
        <id>Q8IUH8</id>
        <label>SPPL2C</label>
    </interactant>
    <organismsDiffer>false</organismsDiffer>
    <experiments>3</experiments>
</comment>
<comment type="interaction">
    <interactant intactId="EBI-22310682">
        <id>P0DPK4</id>
    </interactant>
    <interactant intactId="EBI-3866665">
        <id>O43609</id>
        <label>SPRY1</label>
    </interactant>
    <organismsDiffer>false</organismsDiffer>
    <experiments>3</experiments>
</comment>
<comment type="interaction">
    <interactant intactId="EBI-22310682">
        <id>P0DPK4</id>
    </interactant>
    <interactant intactId="EBI-2652799">
        <id>Q99469</id>
        <label>STAC</label>
    </interactant>
    <organismsDiffer>false</organismsDiffer>
    <experiments>3</experiments>
</comment>
<comment type="interaction">
    <interactant intactId="EBI-22310682">
        <id>P0DPK4</id>
    </interactant>
    <interactant intactId="EBI-749295">
        <id>O75716</id>
        <label>STK16</label>
    </interactant>
    <organismsDiffer>false</organismsDiffer>
    <experiments>3</experiments>
</comment>
<comment type="interaction">
    <interactant intactId="EBI-22310682">
        <id>P0DPK4</id>
    </interactant>
    <interactant intactId="EBI-12017416">
        <id>Q9BX59</id>
        <label>TAPBPL</label>
    </interactant>
    <organismsDiffer>false</organismsDiffer>
    <experiments>3</experiments>
</comment>
<comment type="interaction">
    <interactant intactId="EBI-22310682">
        <id>P0DPK4</id>
    </interactant>
    <interactant intactId="EBI-11974855">
        <id>Q9Y4C2-2</id>
        <label>TCAF1</label>
    </interactant>
    <organismsDiffer>false</organismsDiffer>
    <experiments>3</experiments>
</comment>
<comment type="interaction">
    <interactant intactId="EBI-22310682">
        <id>P0DPK4</id>
    </interactant>
    <interactant intactId="EBI-741350">
        <id>Q9BT49</id>
        <label>THAP7</label>
    </interactant>
    <organismsDiffer>false</organismsDiffer>
    <experiments>3</experiments>
</comment>
<comment type="interaction">
    <interactant intactId="EBI-22310682">
        <id>P0DPK4</id>
    </interactant>
    <interactant intactId="EBI-11741437">
        <id>Q08117-2</id>
        <label>TLE5</label>
    </interactant>
    <organismsDiffer>false</organismsDiffer>
    <experiments>3</experiments>
</comment>
<comment type="interaction">
    <interactant intactId="EBI-22310682">
        <id>P0DPK4</id>
    </interactant>
    <interactant intactId="EBI-11423693">
        <id>Q9UIK5</id>
        <label>TMEFF2</label>
    </interactant>
    <organismsDiffer>false</organismsDiffer>
    <experiments>3</experiments>
</comment>
<comment type="interaction">
    <interactant intactId="EBI-22310682">
        <id>P0DPK4</id>
    </interactant>
    <interactant intactId="EBI-2799342">
        <id>Q86TG1</id>
        <label>TMEM150A</label>
    </interactant>
    <organismsDiffer>false</organismsDiffer>
    <experiments>3</experiments>
</comment>
<comment type="interaction">
    <interactant intactId="EBI-22310682">
        <id>P0DPK4</id>
    </interactant>
    <interactant intactId="EBI-11997340">
        <id>P0DTL5</id>
        <label>TMEM276</label>
    </interactant>
    <organismsDiffer>false</organismsDiffer>
    <experiments>3</experiments>
</comment>
<comment type="interaction">
    <interactant intactId="EBI-22310682">
        <id>P0DPK4</id>
    </interactant>
    <interactant intactId="EBI-2509913">
        <id>Q96KP6</id>
        <label>TNIP3</label>
    </interactant>
    <organismsDiffer>false</organismsDiffer>
    <experiments>3</experiments>
</comment>
<comment type="interaction">
    <interactant intactId="EBI-22310682">
        <id>P0DPK4</id>
    </interactant>
    <interactant intactId="EBI-949753">
        <id>Q63HR2</id>
        <label>TNS2</label>
    </interactant>
    <organismsDiffer>false</organismsDiffer>
    <experiments>3</experiments>
</comment>
<comment type="interaction">
    <interactant intactId="EBI-22310682">
        <id>P0DPK4</id>
    </interactant>
    <interactant intactId="EBI-719893">
        <id>Q8WVR3</id>
        <label>TRAPPC14</label>
    </interactant>
    <organismsDiffer>false</organismsDiffer>
    <experiments>3</experiments>
</comment>
<comment type="interaction">
    <interactant intactId="EBI-22310682">
        <id>P0DPK4</id>
    </interactant>
    <interactant intactId="EBI-5235829">
        <id>Q8IWZ5</id>
        <label>TRIM42</label>
    </interactant>
    <organismsDiffer>false</organismsDiffer>
    <experiments>3</experiments>
</comment>
<comment type="interaction">
    <interactant intactId="EBI-22310682">
        <id>P0DPK4</id>
    </interactant>
    <interactant intactId="EBI-2349743">
        <id>Q12815</id>
        <label>TROAP</label>
    </interactant>
    <organismsDiffer>false</organismsDiffer>
    <experiments>3</experiments>
</comment>
<comment type="interaction">
    <interactant intactId="EBI-22310682">
        <id>P0DPK4</id>
    </interactant>
    <interactant intactId="EBI-8652667">
        <id>O14817</id>
        <label>TSPAN4</label>
    </interactant>
    <organismsDiffer>false</organismsDiffer>
    <experiments>3</experiments>
</comment>
<comment type="interaction">
    <interactant intactId="EBI-22310682">
        <id>P0DPK4</id>
    </interactant>
    <interactant intactId="EBI-10210710">
        <id>P49638</id>
        <label>TTPA</label>
    </interactant>
    <organismsDiffer>false</organismsDiffer>
    <experiments>3</experiments>
</comment>
<comment type="interaction">
    <interactant intactId="EBI-22310682">
        <id>P0DPK4</id>
    </interactant>
    <interactant intactId="EBI-5457544">
        <id>Q9BRU9</id>
        <label>UTP23</label>
    </interactant>
    <organismsDiffer>false</organismsDiffer>
    <experiments>3</experiments>
</comment>
<comment type="interaction">
    <interactant intactId="EBI-22310682">
        <id>P0DPK4</id>
    </interactant>
    <interactant intactId="EBI-357355">
        <id>Q9UBK9</id>
        <label>UXT</label>
    </interactant>
    <organismsDiffer>false</organismsDiffer>
    <experiments>3</experiments>
</comment>
<comment type="interaction">
    <interactant intactId="EBI-22310682">
        <id>P0DPK4</id>
    </interactant>
    <interactant intactId="EBI-10249550">
        <id>Q6EMK4</id>
        <label>VASN</label>
    </interactant>
    <organismsDiffer>false</organismsDiffer>
    <experiments>3</experiments>
</comment>
<comment type="interaction">
    <interactant intactId="EBI-22310682">
        <id>P0DPK4</id>
    </interactant>
    <interactant intactId="EBI-12032042">
        <id>Q64LD2-2</id>
        <label>WDR25</label>
    </interactant>
    <organismsDiffer>false</organismsDiffer>
    <experiments>3</experiments>
</comment>
<comment type="interaction">
    <interactant intactId="EBI-22310682">
        <id>P0DPK4</id>
    </interactant>
    <interactant intactId="EBI-2818796">
        <id>Q8WTX9</id>
        <label>ZDHHC1</label>
    </interactant>
    <organismsDiffer>false</organismsDiffer>
    <experiments>3</experiments>
</comment>
<comment type="interaction">
    <interactant intactId="EBI-22310682">
        <id>P0DPK4</id>
    </interactant>
    <interactant intactId="EBI-2555767">
        <id>Q15973</id>
        <label>ZNF124</label>
    </interactant>
    <organismsDiffer>false</organismsDiffer>
    <experiments>3</experiments>
</comment>
<comment type="interaction">
    <interactant intactId="EBI-22310682">
        <id>P0DPK4</id>
    </interactant>
    <interactant intactId="EBI-11993110">
        <id>Q9P2F9</id>
        <label>ZNF319</label>
    </interactant>
    <organismsDiffer>false</organismsDiffer>
    <experiments>3</experiments>
</comment>
<comment type="interaction">
    <interactant intactId="EBI-22310682">
        <id>P0DPK4</id>
    </interactant>
    <interactant intactId="EBI-373456">
        <id>Q9Y3S2</id>
        <label>ZNF330</label>
    </interactant>
    <organismsDiffer>false</organismsDiffer>
    <experiments>3</experiments>
</comment>
<comment type="interaction">
    <interactant intactId="EBI-22310682">
        <id>P0DPK4</id>
    </interactant>
    <interactant intactId="EBI-347633">
        <id>Q9H9D4</id>
        <label>ZNF408</label>
    </interactant>
    <organismsDiffer>false</organismsDiffer>
    <experiments>3</experiments>
</comment>
<comment type="interaction">
    <interactant intactId="EBI-22310682">
        <id>P0DPK4</id>
    </interactant>
    <interactant intactId="EBI-744257">
        <id>Q96IQ9</id>
        <label>ZNF414</label>
    </interactant>
    <organismsDiffer>false</organismsDiffer>
    <experiments>3</experiments>
</comment>
<comment type="interaction">
    <interactant intactId="EBI-22310682">
        <id>P0DPK4</id>
    </interactant>
    <interactant intactId="EBI-740727">
        <id>Q8TAU3</id>
        <label>ZNF417</label>
    </interactant>
    <organismsDiffer>false</organismsDiffer>
    <experiments>3</experiments>
</comment>
<comment type="interaction">
    <interactant intactId="EBI-22310682">
        <id>P0DPK4</id>
    </interactant>
    <interactant intactId="EBI-726439">
        <id>Q8IYI8</id>
        <label>ZNF440</label>
    </interactant>
    <organismsDiffer>false</organismsDiffer>
    <experiments>3</experiments>
</comment>
<comment type="interaction">
    <interactant intactId="EBI-22310682">
        <id>P0DPK4</id>
    </interactant>
    <interactant intactId="EBI-740232">
        <id>Q9NWS9-2</id>
        <label>ZNF446</label>
    </interactant>
    <organismsDiffer>false</organismsDiffer>
    <experiments>3</experiments>
</comment>
<comment type="interaction">
    <interactant intactId="EBI-22310682">
        <id>P0DPK4</id>
    </interactant>
    <interactant intactId="EBI-10486136">
        <id>Q6ZNH5</id>
        <label>ZNF497</label>
    </interactant>
    <organismsDiffer>false</organismsDiffer>
    <experiments>3</experiments>
</comment>
<comment type="interaction">
    <interactant intactId="EBI-22310682">
        <id>P0DPK4</id>
    </interactant>
    <interactant intactId="EBI-746277">
        <id>Q9UK33</id>
        <label>ZNF580</label>
    </interactant>
    <organismsDiffer>false</organismsDiffer>
    <experiments>3</experiments>
</comment>
<comment type="interaction">
    <interactant intactId="EBI-22310682">
        <id>P0DPK4</id>
    </interactant>
    <interactant intactId="EBI-745520">
        <id>Q9P0T4</id>
        <label>ZNF581</label>
    </interactant>
    <organismsDiffer>false</organismsDiffer>
    <experiments>3</experiments>
</comment>
<comment type="interaction">
    <interactant intactId="EBI-22310682">
        <id>P0DPK4</id>
    </interactant>
    <interactant intactId="EBI-6427977">
        <id>Q96SQ5</id>
        <label>ZNF587</label>
    </interactant>
    <organismsDiffer>false</organismsDiffer>
    <experiments>3</experiments>
</comment>
<comment type="interaction">
    <interactant intactId="EBI-22310682">
        <id>P0DPK4</id>
    </interactant>
    <interactant intactId="EBI-11985915">
        <id>Q5T619</id>
        <label>ZNF648</label>
    </interactant>
    <organismsDiffer>false</organismsDiffer>
    <experiments>3</experiments>
</comment>
<comment type="interaction">
    <interactant intactId="EBI-22310682">
        <id>P0DPK4</id>
    </interactant>
    <interactant intactId="EBI-12146251">
        <id>Q499Z4</id>
        <label>ZNF672</label>
    </interactant>
    <organismsDiffer>false</organismsDiffer>
    <experiments>3</experiments>
</comment>
<comment type="interaction">
    <interactant intactId="EBI-22310682">
        <id>P0DPK4</id>
    </interactant>
    <interactant intactId="EBI-10265203">
        <id>Q8N393</id>
        <label>ZNF786</label>
    </interactant>
    <organismsDiffer>false</organismsDiffer>
    <experiments>3</experiments>
</comment>
<comment type="interaction">
    <interactant intactId="EBI-22310682">
        <id>P0DPK4</id>
    </interactant>
    <interactant intactId="EBI-11962574">
        <id>Q96EG3</id>
        <label>ZNF837</label>
    </interactant>
    <organismsDiffer>false</organismsDiffer>
    <experiments>3</experiments>
</comment>
<comment type="subcellular location">
    <subcellularLocation>
        <location evidence="5 12">Secreted</location>
    </subcellularLocation>
</comment>
<comment type="alternative products">
    <event type="alternative splicing"/>
    <isoform>
        <id>P0DPK4-1</id>
        <name>1</name>
        <sequence type="displayed"/>
    </isoform>
    <isoform>
        <id>P0DPK4-2</id>
        <name>2</name>
        <sequence type="described" ref="VSP_061522"/>
    </isoform>
</comment>
<comment type="tissue specificity">
    <text evidence="5">Expressed in radial glia neural stem cells during cortical development.</text>
</comment>
<comment type="developmental stage">
    <text evidence="6">Expressed at very low level during corticogenesis.</text>
</comment>
<comment type="disease" evidence="7 8 9">
    <disease id="DI-05726">
        <name>Neuronal intranuclear inclusion disease</name>
        <acronym>NIID</acronym>
        <description>An autosomal dominant, slowly progressive, neurodegenerative disease characterized by eosinophilic hyaline intranuclear inclusions in the central and peripheral nervous system, and also in the visceral organs. Clinical manifestations are variable and include pyramidal and extrapyramidal symptoms, cerebellar ataxia, cognitive decline and dementia, peripheral neuropathy, and autonomic dysfunction.</description>
        <dbReference type="MIM" id="603472"/>
    </disease>
    <text evidence="7 8 9">The disease is caused by variants affecting the gene represented in this entry. The molecular defect in NOTCH2NLC is a CGG repeat expansion in the 5-prime untranslated region of the gene. The expansion can be greater than one hundred repeat units in patients, while healthy individuals have 5 to 43 repeats.</text>
</comment>
<comment type="disease">
    <text evidence="5">Defects in NOTCH2NLC may be a cause of chromosome 1q21.1 deletion/duplication syndrome (PubMed:29856954). Deletions of NOTCH2NL (NOTCH2NLA, NOTCH2NLB and/or NOTCH2NLC) are present in patients affected by microcephaly, whereas macrocephaly is observed in patients with NOTCH2NL duplications (PubMed:29856954).</text>
</comment>
<comment type="disease" evidence="10">
    <disease id="DI-05828">
        <name>Tremor, hereditary essential 6</name>
        <acronym>ETM6</acronym>
        <description>A form of essential tremor, a common movement disorder mainly characterized by postural tremor of the arms. Head, legs, trunk, voice, jaw, and facial muscles may also be involved. The condition can be aggravated by emotions, hunger, fatigue and temperature extremes, and may cause a functional disability or even incapacitation. ETM6 inheritance is autosomal dominant.</description>
        <dbReference type="MIM" id="618866"/>
    </disease>
    <text>The disease is caused by variants affecting the gene represented in this entry.</text>
</comment>
<comment type="disease" evidence="11 12">
    <disease id="DI-06192">
        <name>Oculopharyngodistal myopathy 3</name>
        <acronym>OPDM3</acronym>
        <description>A form of oculopharyngodistal myopathy, a rare hereditary muscle disease characterized by progressive distal limb weakness, ptosis, ophthalmoplegia, bulbar muscle weakness and rimmed vacuoles on muscle biopsy. In addition to muscular features, OPDM3 patients may develop pigmentary retinopathy, peripheral neuropathy, or hearing loss. Cognition is usually not affected, but there may be deficits or psychiatric manifestations. Brain imaging tends to show a leukoencephalopathy, often with a characteristic linear signal along the corticomedullary junction on brain imaging. OPDM3 is a slowly progressive form with an autosomal dominant transmission pattern, and variable age at onset ranging from childhood to late adulthood.</description>
        <dbReference type="MIM" id="619473"/>
    </disease>
    <text evidence="12">The disease is caused by variants affecting the gene represented in this entry. The causative mutation is a heterozygous trinucleotide repeat expansion (CGG) that results in expanded polyglycine (polyG) tract in isoform 1. Mutant proteins may form aggregates that contribute to toxicity and induce cell death.</text>
</comment>
<comment type="miscellaneous">
    <text evidence="5">NOTCH2NLA, NOTCH2NLB and NOTCH2NLC paralogs arose between 4 and 3 million years ago, after the separation of hominids from the chimpanzee and during the early stages of the expansion of the human cortex.</text>
</comment>
<comment type="similarity">
    <text evidence="16">Belongs to the NOTCH family.</text>
</comment>
<proteinExistence type="evidence at protein level"/>
<reference key="1">
    <citation type="journal article" date="2006" name="Nature">
        <title>The DNA sequence and biological annotation of human chromosome 1.</title>
        <authorList>
            <person name="Gregory S.G."/>
            <person name="Barlow K.F."/>
            <person name="McLay K.E."/>
            <person name="Kaul R."/>
            <person name="Swarbreck D."/>
            <person name="Dunham A."/>
            <person name="Scott C.E."/>
            <person name="Howe K.L."/>
            <person name="Woodfine K."/>
            <person name="Spencer C.C.A."/>
            <person name="Jones M.C."/>
            <person name="Gillson C."/>
            <person name="Searle S."/>
            <person name="Zhou Y."/>
            <person name="Kokocinski F."/>
            <person name="McDonald L."/>
            <person name="Evans R."/>
            <person name="Phillips K."/>
            <person name="Atkinson A."/>
            <person name="Cooper R."/>
            <person name="Jones C."/>
            <person name="Hall R.E."/>
            <person name="Andrews T.D."/>
            <person name="Lloyd C."/>
            <person name="Ainscough R."/>
            <person name="Almeida J.P."/>
            <person name="Ambrose K.D."/>
            <person name="Anderson F."/>
            <person name="Andrew R.W."/>
            <person name="Ashwell R.I.S."/>
            <person name="Aubin K."/>
            <person name="Babbage A.K."/>
            <person name="Bagguley C.L."/>
            <person name="Bailey J."/>
            <person name="Beasley H."/>
            <person name="Bethel G."/>
            <person name="Bird C.P."/>
            <person name="Bray-Allen S."/>
            <person name="Brown J.Y."/>
            <person name="Brown A.J."/>
            <person name="Buckley D."/>
            <person name="Burton J."/>
            <person name="Bye J."/>
            <person name="Carder C."/>
            <person name="Chapman J.C."/>
            <person name="Clark S.Y."/>
            <person name="Clarke G."/>
            <person name="Clee C."/>
            <person name="Cobley V."/>
            <person name="Collier R.E."/>
            <person name="Corby N."/>
            <person name="Coville G.J."/>
            <person name="Davies J."/>
            <person name="Deadman R."/>
            <person name="Dunn M."/>
            <person name="Earthrowl M."/>
            <person name="Ellington A.G."/>
            <person name="Errington H."/>
            <person name="Frankish A."/>
            <person name="Frankland J."/>
            <person name="French L."/>
            <person name="Garner P."/>
            <person name="Garnett J."/>
            <person name="Gay L."/>
            <person name="Ghori M.R.J."/>
            <person name="Gibson R."/>
            <person name="Gilby L.M."/>
            <person name="Gillett W."/>
            <person name="Glithero R.J."/>
            <person name="Grafham D.V."/>
            <person name="Griffiths C."/>
            <person name="Griffiths-Jones S."/>
            <person name="Grocock R."/>
            <person name="Hammond S."/>
            <person name="Harrison E.S.I."/>
            <person name="Hart E."/>
            <person name="Haugen E."/>
            <person name="Heath P.D."/>
            <person name="Holmes S."/>
            <person name="Holt K."/>
            <person name="Howden P.J."/>
            <person name="Hunt A.R."/>
            <person name="Hunt S.E."/>
            <person name="Hunter G."/>
            <person name="Isherwood J."/>
            <person name="James R."/>
            <person name="Johnson C."/>
            <person name="Johnson D."/>
            <person name="Joy A."/>
            <person name="Kay M."/>
            <person name="Kershaw J.K."/>
            <person name="Kibukawa M."/>
            <person name="Kimberley A.M."/>
            <person name="King A."/>
            <person name="Knights A.J."/>
            <person name="Lad H."/>
            <person name="Laird G."/>
            <person name="Lawlor S."/>
            <person name="Leongamornlert D.A."/>
            <person name="Lloyd D.M."/>
            <person name="Loveland J."/>
            <person name="Lovell J."/>
            <person name="Lush M.J."/>
            <person name="Lyne R."/>
            <person name="Martin S."/>
            <person name="Mashreghi-Mohammadi M."/>
            <person name="Matthews L."/>
            <person name="Matthews N.S.W."/>
            <person name="McLaren S."/>
            <person name="Milne S."/>
            <person name="Mistry S."/>
            <person name="Moore M.J.F."/>
            <person name="Nickerson T."/>
            <person name="O'Dell C.N."/>
            <person name="Oliver K."/>
            <person name="Palmeiri A."/>
            <person name="Palmer S.A."/>
            <person name="Parker A."/>
            <person name="Patel D."/>
            <person name="Pearce A.V."/>
            <person name="Peck A.I."/>
            <person name="Pelan S."/>
            <person name="Phelps K."/>
            <person name="Phillimore B.J."/>
            <person name="Plumb R."/>
            <person name="Rajan J."/>
            <person name="Raymond C."/>
            <person name="Rouse G."/>
            <person name="Saenphimmachak C."/>
            <person name="Sehra H.K."/>
            <person name="Sheridan E."/>
            <person name="Shownkeen R."/>
            <person name="Sims S."/>
            <person name="Skuce C.D."/>
            <person name="Smith M."/>
            <person name="Steward C."/>
            <person name="Subramanian S."/>
            <person name="Sycamore N."/>
            <person name="Tracey A."/>
            <person name="Tromans A."/>
            <person name="Van Helmond Z."/>
            <person name="Wall M."/>
            <person name="Wallis J.M."/>
            <person name="White S."/>
            <person name="Whitehead S.L."/>
            <person name="Wilkinson J.E."/>
            <person name="Willey D.L."/>
            <person name="Williams H."/>
            <person name="Wilming L."/>
            <person name="Wray P.W."/>
            <person name="Wu Z."/>
            <person name="Coulson A."/>
            <person name="Vaudin M."/>
            <person name="Sulston J.E."/>
            <person name="Durbin R.M."/>
            <person name="Hubbard T."/>
            <person name="Wooster R."/>
            <person name="Dunham I."/>
            <person name="Carter N.P."/>
            <person name="McVean G."/>
            <person name="Ross M.T."/>
            <person name="Harrow J."/>
            <person name="Olson M.V."/>
            <person name="Beck S."/>
            <person name="Rogers J."/>
            <person name="Bentley D.R."/>
        </authorList>
    </citation>
    <scope>NUCLEOTIDE SEQUENCE [LARGE SCALE GENOMIC DNA]</scope>
</reference>
<reference key="2">
    <citation type="journal article" date="2018" name="Cell">
        <title>Human-specific NOTCH2NL genes affect Notch signaling and cortical neurogenesis.</title>
        <authorList>
            <person name="Fiddes I.T."/>
            <person name="Lodewijk G.A."/>
            <person name="Mooring M."/>
            <person name="Bosworth C.M."/>
            <person name="Ewing A.D."/>
            <person name="Mantalas G.L."/>
            <person name="Novak A.M."/>
            <person name="van den Bout A."/>
            <person name="Bishara A."/>
            <person name="Rosenkrantz J.L."/>
            <person name="Lorig-Roach R."/>
            <person name="Field A.R."/>
            <person name="Haeussler M."/>
            <person name="Russo L."/>
            <person name="Bhaduri A."/>
            <person name="Nowakowski T.J."/>
            <person name="Pollen A.A."/>
            <person name="Dougherty M.L."/>
            <person name="Nuttle X."/>
            <person name="Addor M.C."/>
            <person name="Zwolinski S."/>
            <person name="Katzman S."/>
            <person name="Kriegstein A."/>
            <person name="Eichler E.E."/>
            <person name="Salama S.R."/>
            <person name="Jacobs F.M.J."/>
            <person name="Haussler D."/>
        </authorList>
    </citation>
    <scope>FUNCTION</scope>
    <scope>SUBCELLULAR LOCATION</scope>
    <scope>INTERACTION WITH NOTCH2</scope>
    <scope>TISSUE SPECIFICITY</scope>
    <scope>INVOLVEMENT IN CHROMOSOME 1Q21.1 DELETION/DUPLICATION SYNDROME</scope>
</reference>
<reference key="3">
    <citation type="journal article" date="2018" name="Cell">
        <title>Human-specific NOTCH2NL genes expand cortical neurogenesis through Delta/Notch regulation.</title>
        <authorList>
            <person name="Suzuki I.K."/>
            <person name="Gacquer D."/>
            <person name="Van Heurck R."/>
            <person name="Kumar D."/>
            <person name="Wojno M."/>
            <person name="Bilheu A."/>
            <person name="Herpoel A."/>
            <person name="Lambert N."/>
            <person name="Cheron J."/>
            <person name="Polleux F."/>
            <person name="Detours V."/>
            <person name="Vanderhaeghen P."/>
        </authorList>
    </citation>
    <scope>FUNCTION</scope>
    <scope>DEVELOPMENTAL STAGE</scope>
</reference>
<reference key="4">
    <citation type="journal article" date="2018" name="Elife">
        <title>Evolution and cell-type specificity of human-specific genes preferentially expressed in progenitors of fetal neocortex.</title>
        <authorList>
            <person name="Florio M."/>
            <person name="Heide M."/>
            <person name="Pinson A."/>
            <person name="Brandl H."/>
            <person name="Albert M."/>
            <person name="Winkler S."/>
            <person name="Wimberger P."/>
            <person name="Huttner W.B."/>
            <person name="Hiller M."/>
        </authorList>
    </citation>
    <scope>FUNCTION</scope>
</reference>
<reference key="5">
    <citation type="journal article" date="2019" name="Am. J. Hum. Genet.">
        <title>Expansion of human-specific GGC repeat in neuronal intranuclear inclusion disease-related disorders.</title>
        <authorList>
            <person name="Tian Y."/>
            <person name="Wang J.L."/>
            <person name="Huang W."/>
            <person name="Zeng S."/>
            <person name="Jiao B."/>
            <person name="Liu Z."/>
            <person name="Chen Z."/>
            <person name="Li Y."/>
            <person name="Wang Y."/>
            <person name="Min H.X."/>
            <person name="Wang X.J."/>
            <person name="You Y."/>
            <person name="Zhang R.X."/>
            <person name="Chen X.Y."/>
            <person name="Yi F."/>
            <person name="Zhou Y.F."/>
            <person name="Long H.Y."/>
            <person name="Zhou C.J."/>
            <person name="Hou X."/>
            <person name="Wang J.P."/>
            <person name="Xie B."/>
            <person name="Liang F."/>
            <person name="Yang Z.Y."/>
            <person name="Sun Q.Y."/>
            <person name="Allen E.G."/>
            <person name="Shafik A.M."/>
            <person name="Kong H.E."/>
            <person name="Guo J.F."/>
            <person name="Yan X.X."/>
            <person name="Hu Z.M."/>
            <person name="Xia K."/>
            <person name="Jiang H."/>
            <person name="Xu H.W."/>
            <person name="Duan R.H."/>
            <person name="Jin P."/>
            <person name="Tang B.S."/>
            <person name="Shen L."/>
        </authorList>
    </citation>
    <scope>INVOLVEMENT IN NIID</scope>
</reference>
<reference key="6">
    <citation type="journal article" date="2019" name="Nat. Genet.">
        <title>Long-read sequencing identifies GGC repeat expansions in NOTCH2NLC associated with neuronal intranuclear inclusion disease.</title>
        <authorList>
            <person name="Sone J."/>
            <person name="Mitsuhashi S."/>
            <person name="Fujita A."/>
            <person name="Mizuguchi T."/>
            <person name="Hamanaka K."/>
            <person name="Mori K."/>
            <person name="Koike H."/>
            <person name="Hashiguchi A."/>
            <person name="Takashima H."/>
            <person name="Sugiyama H."/>
            <person name="Kohno Y."/>
            <person name="Takiyama Y."/>
            <person name="Maeda K."/>
            <person name="Doi H."/>
            <person name="Koyano S."/>
            <person name="Takeuchi H."/>
            <person name="Kawamoto M."/>
            <person name="Kohara N."/>
            <person name="Ando T."/>
            <person name="Ieda T."/>
            <person name="Kita Y."/>
            <person name="Kokubun N."/>
            <person name="Tsuboi Y."/>
            <person name="Katoh K."/>
            <person name="Kino Y."/>
            <person name="Katsuno M."/>
            <person name="Iwasaki Y."/>
            <person name="Yoshida M."/>
            <person name="Tanaka F."/>
            <person name="Suzuki I.K."/>
            <person name="Frith M.C."/>
            <person name="Matsumoto N."/>
            <person name="Sobue G."/>
        </authorList>
    </citation>
    <scope>INVOLVEMENT IN NIID</scope>
</reference>
<reference key="7">
    <citation type="journal article" date="2019" name="Nat. Genet.">
        <title>Noncoding CGG repeat expansions in neuronal intranuclear inclusion disease, oculopharyngodistal myopathy and an overlapping disease.</title>
        <authorList>
            <person name="Ishiura H."/>
            <person name="Shibata S."/>
            <person name="Yoshimura J."/>
            <person name="Suzuki Y."/>
            <person name="Qu W."/>
            <person name="Doi K."/>
            <person name="Almansour M.A."/>
            <person name="Kikuchi J.K."/>
            <person name="Taira M."/>
            <person name="Mitsui J."/>
            <person name="Takahashi Y."/>
            <person name="Ichikawa Y."/>
            <person name="Mano T."/>
            <person name="Iwata A."/>
            <person name="Harigaya Y."/>
            <person name="Matsukawa M.K."/>
            <person name="Matsukawa T."/>
            <person name="Tanaka M."/>
            <person name="Shirota Y."/>
            <person name="Ohtomo R."/>
            <person name="Kowa H."/>
            <person name="Date H."/>
            <person name="Mitsue A."/>
            <person name="Hatsuta H."/>
            <person name="Morimoto S."/>
            <person name="Murayama S."/>
            <person name="Shiio Y."/>
            <person name="Saito Y."/>
            <person name="Mitsutake A."/>
            <person name="Kawai M."/>
            <person name="Sasaki T."/>
            <person name="Sugiyama Y."/>
            <person name="Hamada M."/>
            <person name="Ohtomo G."/>
            <person name="Terao Y."/>
            <person name="Nakazato Y."/>
            <person name="Takeda A."/>
            <person name="Sakiyama Y."/>
            <person name="Umeda-Kameyama Y."/>
            <person name="Shinmi J."/>
            <person name="Ogata K."/>
            <person name="Kohno Y."/>
            <person name="Lim S.Y."/>
            <person name="Tan A.H."/>
            <person name="Shimizu J."/>
            <person name="Goto J."/>
            <person name="Nishino I."/>
            <person name="Toda T."/>
            <person name="Morishita S."/>
            <person name="Tsuji S."/>
        </authorList>
    </citation>
    <scope>INVOLVEMENT IN NIID</scope>
</reference>
<reference key="8">
    <citation type="journal article" date="2020" name="Acta Neuropathol. Commun.">
        <title>CGG expansion in NOTCH2NLC is associated with oculopharyngodistal myopathy with neurological manifestations.</title>
        <authorList>
            <person name="Ogasawara M."/>
            <person name="Iida A."/>
            <person name="Kumutpongpanich T."/>
            <person name="Ozaki A."/>
            <person name="Oya Y."/>
            <person name="Konishi H."/>
            <person name="Nakamura A."/>
            <person name="Abe R."/>
            <person name="Takai H."/>
            <person name="Hanajima R."/>
            <person name="Doi H."/>
            <person name="Tanaka F."/>
            <person name="Nakamura H."/>
            <person name="Nonaka I."/>
            <person name="Wang Z."/>
            <person name="Hayashi S."/>
            <person name="Noguchi S."/>
            <person name="Nishino I."/>
        </authorList>
    </citation>
    <scope>INVOLVEMENT IN OPDM3 (ISOFORM 2)</scope>
</reference>
<reference key="9">
    <citation type="journal article" date="2021" name="Brain">
        <title>The GGC repeat expansion in NOTCH2NLC is associated with oculopharyngodistal myopathy type 3.</title>
        <authorList>
            <person name="Yu J."/>
            <person name="Deng J."/>
            <person name="Guo X."/>
            <person name="Shan J."/>
            <person name="Luan X."/>
            <person name="Cao L."/>
            <person name="Zhao J."/>
            <person name="Yu M."/>
            <person name="Zhang W."/>
            <person name="Lv H."/>
            <person name="Xie Z."/>
            <person name="Meng L."/>
            <person name="Zheng Y."/>
            <person name="Zhao Y."/>
            <person name="Gang Q."/>
            <person name="Wang Q."/>
            <person name="Liu J."/>
            <person name="Zhu M."/>
            <person name="Zhou B."/>
            <person name="Li P."/>
            <person name="Liu Y."/>
            <person name="Wang Y."/>
            <person name="Yan C."/>
            <person name="Hong D."/>
            <person name="Yuan Y."/>
            <person name="Wang Z."/>
        </authorList>
    </citation>
    <scope>ALTERNATIVE SPLICING (ISOFORMS 1 AND 2)</scope>
    <scope>INVOLVEMENT IN OPDM3</scope>
    <scope>SUBCELLULAR LOCATION</scope>
</reference>
<reference key="10">
    <citation type="journal article" date="2021" name="Brain">
        <authorList>
            <person name="Yu J."/>
            <person name="Deng J."/>
            <person name="Guo X."/>
            <person name="Shan J."/>
            <person name="Luan X."/>
            <person name="Cao L."/>
            <person name="Zhao J."/>
            <person name="Yu M."/>
            <person name="Zhang W."/>
            <person name="Lv H."/>
            <person name="Xie Z."/>
            <person name="Meng L."/>
            <person name="Zheng Y."/>
            <person name="Zhao Y."/>
            <person name="Gang Q."/>
            <person name="Wang Q."/>
            <person name="Liu J."/>
            <person name="Zhu M."/>
            <person name="Zhou B."/>
            <person name="Li P."/>
            <person name="Liu Y."/>
            <person name="Wang Y."/>
            <person name="Yan C."/>
            <person name="Hong D."/>
            <person name="Yuan Y."/>
            <person name="Wang Z."/>
        </authorList>
    </citation>
    <scope>ERRATUM OF PUBMED:33693509</scope>
</reference>
<reference key="11">
    <citation type="journal article" date="2020" name="Brain">
        <title>Expansion of GGC repeat in the human-specific NOTCH2NLC gene is associated with essential tremor.</title>
        <authorList>
            <person name="Sun Q.Y."/>
            <person name="Xu Q."/>
            <person name="Tian Y."/>
            <person name="Hu Z.M."/>
            <person name="Qin L.X."/>
            <person name="Yang J.X."/>
            <person name="Huang W."/>
            <person name="Xue J."/>
            <person name="Li J.C."/>
            <person name="Zeng S."/>
            <person name="Wang Y."/>
            <person name="Min H.X."/>
            <person name="Chen X.Y."/>
            <person name="Wang J.P."/>
            <person name="Xie B."/>
            <person name="Liang F."/>
            <person name="Zhang H.N."/>
            <person name="Wang C.Y."/>
            <person name="Lei L.F."/>
            <person name="Yan X.X."/>
            <person name="Xu H.W."/>
            <person name="Duan R.H."/>
            <person name="Xia K."/>
            <person name="Liu J.Y."/>
            <person name="Jiang H."/>
            <person name="Shen L."/>
            <person name="Guo J.F."/>
            <person name="Tang B.S."/>
        </authorList>
    </citation>
    <scope>INVOLVEMENT IN ETM6</scope>
</reference>
<reference key="12">
    <citation type="journal article" date="2020" name="Brain">
        <title>Expansion of GGC repeat in the human-specific NOTCH2NLC gene is associated with essential tremor.</title>
        <authorList>
            <person name="Sun Q.Y."/>
            <person name="Xu Q."/>
            <person name="Tian Y."/>
            <person name="Hu Z.M."/>
            <person name="Qin L.X."/>
            <person name="Yang J.X."/>
            <person name="Huang W."/>
            <person name="Xue J."/>
            <person name="Li J.C."/>
            <person name="Zeng S."/>
            <person name="Wang Y."/>
            <person name="Min H.X."/>
            <person name="Chen X.Y."/>
            <person name="Wang J.P."/>
            <person name="Xie B."/>
            <person name="Liang F."/>
            <person name="Zhang H.N."/>
            <person name="Wang C.Y."/>
            <person name="Lei L.F."/>
            <person name="Yan X.X."/>
            <person name="Xu H.W."/>
            <person name="Duan R.H."/>
            <person name="Xia K."/>
            <person name="Liu J.Y."/>
            <person name="Jiang H."/>
            <person name="Shen L."/>
            <person name="Guo J.F."/>
            <person name="Tang B.S."/>
        </authorList>
    </citation>
    <scope>ERRATUM OF PUBMED:31819945</scope>
</reference>
<accession>P0DPK4</accession>
<accession>A0A494C1K9</accession>
<name>NT2NC_HUMAN</name>
<dbReference type="EMBL" id="AC242842">
    <property type="status" value="NOT_ANNOTATED_CDS"/>
    <property type="molecule type" value="Genomic_DNA"/>
</dbReference>
<dbReference type="EMBL" id="AC242843">
    <property type="status" value="NOT_ANNOTATED_CDS"/>
    <property type="molecule type" value="Genomic_DNA"/>
</dbReference>
<dbReference type="CCDS" id="CCDS86015.1">
    <molecule id="P0DPK4-2"/>
</dbReference>
<dbReference type="CCDS" id="CCDS91047.1">
    <molecule id="P0DPK4-1"/>
</dbReference>
<dbReference type="RefSeq" id="NP_001350941.1">
    <molecule id="P0DPK4-2"/>
    <property type="nucleotide sequence ID" value="NM_001364012.2"/>
</dbReference>
<dbReference type="RefSeq" id="NP_001350942.1">
    <molecule id="P0DPK4-1"/>
    <property type="nucleotide sequence ID" value="NM_001364013.2"/>
</dbReference>
<dbReference type="SMR" id="P0DPK4"/>
<dbReference type="FunCoup" id="P0DPK4">
    <property type="interactions" value="7"/>
</dbReference>
<dbReference type="IntAct" id="P0DPK4">
    <property type="interactions" value="217"/>
</dbReference>
<dbReference type="GlyCosmos" id="P0DPK4">
    <property type="glycosylation" value="2 sites, No reported glycans"/>
</dbReference>
<dbReference type="GlyGen" id="P0DPK4">
    <property type="glycosylation" value="3 sites, 1 O-linked glycan (1 site)"/>
</dbReference>
<dbReference type="jPOST" id="P0DPK4"/>
<dbReference type="MassIVE" id="P0DPK4"/>
<dbReference type="PeptideAtlas" id="P0DPK4"/>
<dbReference type="DNASU" id="388677"/>
<dbReference type="Ensembl" id="ENST00000578189.1">
    <molecule id="P0DPK4-2"/>
    <property type="protein sequence ID" value="ENSP00000462298.1"/>
    <property type="gene ID" value="ENSG00000286219.2"/>
</dbReference>
<dbReference type="Ensembl" id="ENST00000650865.2">
    <molecule id="P0DPK4-1"/>
    <property type="protein sequence ID" value="ENSP00000499085.1"/>
    <property type="gene ID" value="ENSG00000286219.2"/>
</dbReference>
<dbReference type="Ensembl" id="ENST00000652191.1">
    <molecule id="P0DPK4-2"/>
    <property type="protein sequence ID" value="ENSP00000498514.1"/>
    <property type="gene ID" value="ENSG00000286219.2"/>
</dbReference>
<dbReference type="GeneID" id="100996717"/>
<dbReference type="MANE-Select" id="ENST00000650865.2">
    <property type="protein sequence ID" value="ENSP00000499085.1"/>
    <property type="RefSeq nucleotide sequence ID" value="NM_001364013.2"/>
    <property type="RefSeq protein sequence ID" value="NP_001350942.1"/>
</dbReference>
<dbReference type="AGR" id="HGNC:53924"/>
<dbReference type="DisGeNET" id="388677"/>
<dbReference type="GeneCards" id="NOTCH2NLC"/>
<dbReference type="HGNC" id="HGNC:53924">
    <property type="gene designation" value="NOTCH2NLC"/>
</dbReference>
<dbReference type="HPA" id="ENSG00000286219">
    <property type="expression patterns" value="Low tissue specificity"/>
</dbReference>
<dbReference type="MalaCards" id="NOTCH2NLC"/>
<dbReference type="MIM" id="603472">
    <property type="type" value="phenotype"/>
</dbReference>
<dbReference type="MIM" id="618025">
    <property type="type" value="gene"/>
</dbReference>
<dbReference type="MIM" id="618866">
    <property type="type" value="phenotype"/>
</dbReference>
<dbReference type="MIM" id="619473">
    <property type="type" value="phenotype"/>
</dbReference>
<dbReference type="neXtProt" id="NX_P0DPK4"/>
<dbReference type="OpenTargets" id="ENSG00000264343"/>
<dbReference type="Orphanet" id="2289">
    <property type="disease" value="Neuronal intranuclear inclusion disease"/>
</dbReference>
<dbReference type="Orphanet" id="98897">
    <property type="disease" value="Oculopharyngodistal myopathy"/>
</dbReference>
<dbReference type="VEuPathDB" id="HostDB:ENSG00000286219"/>
<dbReference type="GeneTree" id="ENSGT00940000167308"/>
<dbReference type="InParanoid" id="P0DPK4"/>
<dbReference type="OMA" id="EASAYIC"/>
<dbReference type="OrthoDB" id="283575at2759"/>
<dbReference type="PAN-GO" id="P0DPK4">
    <property type="GO annotations" value="2 GO annotations based on evolutionary models"/>
</dbReference>
<dbReference type="PathwayCommons" id="P0DPK4"/>
<dbReference type="Reactome" id="R-HSA-2979096">
    <property type="pathway name" value="NOTCH2 Activation and Transmission of Signal to the Nucleus"/>
</dbReference>
<dbReference type="Reactome" id="R-HSA-9911233">
    <property type="pathway name" value="Expression of NOTCH2NL genes"/>
</dbReference>
<dbReference type="Pharos" id="P0DPK4">
    <property type="development level" value="Tbio"/>
</dbReference>
<dbReference type="PRO" id="PR:P0DPK4"/>
<dbReference type="Proteomes" id="UP000005640">
    <property type="component" value="Chromosome 1"/>
</dbReference>
<dbReference type="Bgee" id="ENSG00000286219">
    <property type="expression patterns" value="Expressed in lower esophagus mucosa and 103 other cell types or tissues"/>
</dbReference>
<dbReference type="ExpressionAtlas" id="P0DPK4">
    <property type="expression patterns" value="baseline and differential"/>
</dbReference>
<dbReference type="GO" id="GO:0005576">
    <property type="term" value="C:extracellular region"/>
    <property type="evidence" value="ECO:0000314"/>
    <property type="project" value="UniProtKB"/>
</dbReference>
<dbReference type="GO" id="GO:0005509">
    <property type="term" value="F:calcium ion binding"/>
    <property type="evidence" value="ECO:0007669"/>
    <property type="project" value="InterPro"/>
</dbReference>
<dbReference type="GO" id="GO:0021987">
    <property type="term" value="P:cerebral cortex development"/>
    <property type="evidence" value="ECO:0000314"/>
    <property type="project" value="UniProtKB"/>
</dbReference>
<dbReference type="GO" id="GO:0007219">
    <property type="term" value="P:Notch signaling pathway"/>
    <property type="evidence" value="ECO:0007669"/>
    <property type="project" value="UniProtKB-KW"/>
</dbReference>
<dbReference type="GO" id="GO:0045747">
    <property type="term" value="P:positive regulation of Notch signaling pathway"/>
    <property type="evidence" value="ECO:0000314"/>
    <property type="project" value="UniProtKB"/>
</dbReference>
<dbReference type="CDD" id="cd00054">
    <property type="entry name" value="EGF_CA"/>
    <property type="match status" value="3"/>
</dbReference>
<dbReference type="FunFam" id="2.10.25.10:FF:000151">
    <property type="entry name" value="FAT atypical cadherin 4"/>
    <property type="match status" value="1"/>
</dbReference>
<dbReference type="FunFam" id="2.10.25.10:FF:000393">
    <property type="entry name" value="Neurogenic locus notch homolog protein 2"/>
    <property type="match status" value="1"/>
</dbReference>
<dbReference type="FunFam" id="2.10.25.10:FF:000423">
    <property type="entry name" value="Neurogenic locus notch homolog protein 2"/>
    <property type="match status" value="1"/>
</dbReference>
<dbReference type="FunFam" id="2.10.25.10:FF:000801">
    <property type="entry name" value="Notch homolog 2 N-terminal-like protein C"/>
    <property type="match status" value="1"/>
</dbReference>
<dbReference type="FunFam" id="2.10.25.10:FF:000095">
    <property type="entry name" value="Notch, isoform B"/>
    <property type="match status" value="1"/>
</dbReference>
<dbReference type="Gene3D" id="2.10.25.10">
    <property type="entry name" value="Laminin"/>
    <property type="match status" value="6"/>
</dbReference>
<dbReference type="InterPro" id="IPR001881">
    <property type="entry name" value="EGF-like_Ca-bd_dom"/>
</dbReference>
<dbReference type="InterPro" id="IPR000742">
    <property type="entry name" value="EGF-like_dom"/>
</dbReference>
<dbReference type="InterPro" id="IPR000152">
    <property type="entry name" value="EGF-type_Asp/Asn_hydroxyl_site"/>
</dbReference>
<dbReference type="InterPro" id="IPR018097">
    <property type="entry name" value="EGF_Ca-bd_CS"/>
</dbReference>
<dbReference type="InterPro" id="IPR049883">
    <property type="entry name" value="NOTCH1_EGF-like"/>
</dbReference>
<dbReference type="PANTHER" id="PTHR12916">
    <property type="entry name" value="CYTOCHROME C OXIDASE POLYPEPTIDE VIC-2"/>
    <property type="match status" value="1"/>
</dbReference>
<dbReference type="PANTHER" id="PTHR12916:SF13">
    <property type="entry name" value="SUSHI, VON WILLEBRAND FACTOR TYPE A, EGF AND PENTRAXIN DOMAIN-CONTAINING PROTEIN 1-LIKE"/>
    <property type="match status" value="1"/>
</dbReference>
<dbReference type="Pfam" id="PF00008">
    <property type="entry name" value="EGF"/>
    <property type="match status" value="3"/>
</dbReference>
<dbReference type="Pfam" id="PF07645">
    <property type="entry name" value="EGF_CA"/>
    <property type="match status" value="1"/>
</dbReference>
<dbReference type="PRINTS" id="PR00010">
    <property type="entry name" value="EGFBLOOD"/>
</dbReference>
<dbReference type="SMART" id="SM00181">
    <property type="entry name" value="EGF"/>
    <property type="match status" value="6"/>
</dbReference>
<dbReference type="SMART" id="SM00179">
    <property type="entry name" value="EGF_CA"/>
    <property type="match status" value="4"/>
</dbReference>
<dbReference type="SUPFAM" id="SSF57196">
    <property type="entry name" value="EGF/Laminin"/>
    <property type="match status" value="6"/>
</dbReference>
<dbReference type="PROSITE" id="PS00010">
    <property type="entry name" value="ASX_HYDROXYL"/>
    <property type="match status" value="1"/>
</dbReference>
<dbReference type="PROSITE" id="PS00022">
    <property type="entry name" value="EGF_1"/>
    <property type="match status" value="5"/>
</dbReference>
<dbReference type="PROSITE" id="PS01186">
    <property type="entry name" value="EGF_2"/>
    <property type="match status" value="5"/>
</dbReference>
<dbReference type="PROSITE" id="PS50026">
    <property type="entry name" value="EGF_3"/>
    <property type="match status" value="6"/>
</dbReference>
<dbReference type="PROSITE" id="PS01187">
    <property type="entry name" value="EGF_CA"/>
    <property type="match status" value="1"/>
</dbReference>
<evidence type="ECO:0000250" key="1">
    <source>
        <dbReference type="UniProtKB" id="P0DPK3"/>
    </source>
</evidence>
<evidence type="ECO:0000255" key="2"/>
<evidence type="ECO:0000255" key="3">
    <source>
        <dbReference type="PROSITE-ProRule" id="PRU00076"/>
    </source>
</evidence>
<evidence type="ECO:0000269" key="4">
    <source>
    </source>
</evidence>
<evidence type="ECO:0000269" key="5">
    <source>
    </source>
</evidence>
<evidence type="ECO:0000269" key="6">
    <source>
    </source>
</evidence>
<evidence type="ECO:0000269" key="7">
    <source>
    </source>
</evidence>
<evidence type="ECO:0000269" key="8">
    <source>
    </source>
</evidence>
<evidence type="ECO:0000269" key="9">
    <source>
    </source>
</evidence>
<evidence type="ECO:0000269" key="10">
    <source>
    </source>
</evidence>
<evidence type="ECO:0000269" key="11">
    <source>
    </source>
</evidence>
<evidence type="ECO:0000269" key="12">
    <source>
    </source>
</evidence>
<evidence type="ECO:0000303" key="13">
    <source>
    </source>
</evidence>
<evidence type="ECO:0000303" key="14">
    <source>
    </source>
</evidence>
<evidence type="ECO:0000303" key="15">
    <source>
    </source>
</evidence>
<evidence type="ECO:0000305" key="16"/>
<evidence type="ECO:0000312" key="17">
    <source>
        <dbReference type="HGNC" id="HGNC:53924"/>
    </source>
</evidence>
<gene>
    <name evidence="13 14 17" type="primary">NOTCH2NLC</name>
</gene>
<feature type="chain" id="PRO_0000445071" description="Notch homolog 2 N-terminal-like protein C">
    <location>
        <begin position="1"/>
        <end position="293"/>
    </location>
</feature>
<feature type="domain" description="EGF-like 1" evidence="3">
    <location>
        <begin position="42"/>
        <end position="81"/>
    </location>
</feature>
<feature type="domain" description="EGF-like 2" evidence="3">
    <location>
        <begin position="82"/>
        <end position="120"/>
    </location>
</feature>
<feature type="domain" description="EGF-like 3" evidence="3">
    <location>
        <begin position="123"/>
        <end position="161"/>
    </location>
</feature>
<feature type="domain" description="EGF-like 4" evidence="3">
    <location>
        <begin position="162"/>
        <end position="198"/>
    </location>
</feature>
<feature type="domain" description="EGF-like 5; calcium-binding" evidence="3">
    <location>
        <begin position="200"/>
        <end position="237"/>
    </location>
</feature>
<feature type="domain" description="EGF-like 6" evidence="3">
    <location>
        <begin position="239"/>
        <end position="276"/>
    </location>
</feature>
<feature type="glycosylation site" description="N-linked (GlcNAc...) asparagine" evidence="2">
    <location>
        <position position="64"/>
    </location>
</feature>
<feature type="glycosylation site" description="N-linked (GlcNAc...) asparagine" evidence="2">
    <location>
        <position position="173"/>
    </location>
</feature>
<feature type="disulfide bond" evidence="3">
    <location>
        <begin position="46"/>
        <end position="59"/>
    </location>
</feature>
<feature type="disulfide bond" evidence="3">
    <location>
        <begin position="53"/>
        <end position="69"/>
    </location>
</feature>
<feature type="disulfide bond" evidence="3">
    <location>
        <begin position="71"/>
        <end position="80"/>
    </location>
</feature>
<feature type="disulfide bond" evidence="3">
    <location>
        <begin position="86"/>
        <end position="97"/>
    </location>
</feature>
<feature type="disulfide bond" evidence="3">
    <location>
        <begin position="91"/>
        <end position="108"/>
    </location>
</feature>
<feature type="disulfide bond" evidence="3">
    <location>
        <begin position="110"/>
        <end position="119"/>
    </location>
</feature>
<feature type="disulfide bond" evidence="3">
    <location>
        <begin position="127"/>
        <end position="139"/>
    </location>
</feature>
<feature type="disulfide bond" evidence="3">
    <location>
        <begin position="133"/>
        <end position="149"/>
    </location>
</feature>
<feature type="disulfide bond" evidence="3">
    <location>
        <begin position="151"/>
        <end position="160"/>
    </location>
</feature>
<feature type="disulfide bond" evidence="3">
    <location>
        <begin position="166"/>
        <end position="177"/>
    </location>
</feature>
<feature type="disulfide bond" evidence="3">
    <location>
        <begin position="171"/>
        <end position="186"/>
    </location>
</feature>
<feature type="disulfide bond" evidence="3">
    <location>
        <begin position="188"/>
        <end position="197"/>
    </location>
</feature>
<feature type="disulfide bond" evidence="3">
    <location>
        <begin position="204"/>
        <end position="216"/>
    </location>
</feature>
<feature type="disulfide bond" evidence="3">
    <location>
        <begin position="210"/>
        <end position="225"/>
    </location>
</feature>
<feature type="disulfide bond" evidence="3">
    <location>
        <begin position="227"/>
        <end position="236"/>
    </location>
</feature>
<feature type="disulfide bond" evidence="3">
    <location>
        <begin position="243"/>
        <end position="254"/>
    </location>
</feature>
<feature type="disulfide bond" evidence="3">
    <location>
        <begin position="248"/>
        <end position="264"/>
    </location>
</feature>
<feature type="splice variant" id="VSP_061522" description="In isoform 2." evidence="15">
    <location>
        <begin position="1"/>
        <end position="57"/>
    </location>
</feature>
<organism>
    <name type="scientific">Homo sapiens</name>
    <name type="common">Human</name>
    <dbReference type="NCBI Taxonomy" id="9606"/>
    <lineage>
        <taxon>Eukaryota</taxon>
        <taxon>Metazoa</taxon>
        <taxon>Chordata</taxon>
        <taxon>Craniata</taxon>
        <taxon>Vertebrata</taxon>
        <taxon>Euteleostomi</taxon>
        <taxon>Mammalia</taxon>
        <taxon>Eutheria</taxon>
        <taxon>Euarchontoglires</taxon>
        <taxon>Primates</taxon>
        <taxon>Haplorrhini</taxon>
        <taxon>Catarrhini</taxon>
        <taxon>Hominidae</taxon>
        <taxon>Homo</taxon>
    </lineage>
</organism>
<keyword id="KW-0025">Alternative splicing</keyword>
<keyword id="KW-0106">Calcium</keyword>
<keyword id="KW-1015">Disulfide bond</keyword>
<keyword id="KW-0245">EGF-like domain</keyword>
<keyword id="KW-0325">Glycoprotein</keyword>
<keyword id="KW-0523">Neurodegeneration</keyword>
<keyword id="KW-0914">Notch signaling pathway</keyword>
<keyword id="KW-1185">Reference proteome</keyword>
<keyword id="KW-0677">Repeat</keyword>
<keyword id="KW-0964">Secreted</keyword>
<keyword id="KW-0818">Triplet repeat expansion</keyword>
<protein>
    <recommendedName>
        <fullName evidence="13 14">Notch homolog 2 N-terminal-like protein C</fullName>
    </recommendedName>
</protein>